<accession>Q81495</accession>
<organismHost>
    <name type="scientific">Homo sapiens</name>
    <name type="common">Human</name>
    <dbReference type="NCBI Taxonomy" id="9606"/>
</organismHost>
<evidence type="ECO:0000250" key="1">
    <source>
        <dbReference type="UniProtKB" id="O92972"/>
    </source>
</evidence>
<evidence type="ECO:0000250" key="2">
    <source>
        <dbReference type="UniProtKB" id="P26662"/>
    </source>
</evidence>
<evidence type="ECO:0000250" key="3">
    <source>
        <dbReference type="UniProtKB" id="P26663"/>
    </source>
</evidence>
<evidence type="ECO:0000250" key="4">
    <source>
        <dbReference type="UniProtKB" id="P26664"/>
    </source>
</evidence>
<evidence type="ECO:0000250" key="5">
    <source>
        <dbReference type="UniProtKB" id="P27958"/>
    </source>
</evidence>
<evidence type="ECO:0000250" key="6">
    <source>
        <dbReference type="UniProtKB" id="P29846"/>
    </source>
</evidence>
<evidence type="ECO:0000250" key="7">
    <source>
        <dbReference type="UniProtKB" id="Q01403"/>
    </source>
</evidence>
<evidence type="ECO:0000250" key="8">
    <source>
        <dbReference type="UniProtKB" id="Q03463"/>
    </source>
</evidence>
<evidence type="ECO:0000250" key="9">
    <source>
        <dbReference type="UniProtKB" id="Q5EG65"/>
    </source>
</evidence>
<evidence type="ECO:0000250" key="10">
    <source>
        <dbReference type="UniProtKB" id="Q913V3"/>
    </source>
</evidence>
<evidence type="ECO:0000250" key="11">
    <source>
        <dbReference type="UniProtKB" id="Q99IB8"/>
    </source>
</evidence>
<evidence type="ECO:0000250" key="12">
    <source>
        <dbReference type="UniProtKB" id="Q9WMX2"/>
    </source>
</evidence>
<evidence type="ECO:0000255" key="13"/>
<evidence type="ECO:0000255" key="14">
    <source>
        <dbReference type="PROSITE-ProRule" id="PRU00539"/>
    </source>
</evidence>
<evidence type="ECO:0000255" key="15">
    <source>
        <dbReference type="PROSITE-ProRule" id="PRU00541"/>
    </source>
</evidence>
<evidence type="ECO:0000255" key="16">
    <source>
        <dbReference type="PROSITE-ProRule" id="PRU00542"/>
    </source>
</evidence>
<evidence type="ECO:0000255" key="17">
    <source>
        <dbReference type="PROSITE-ProRule" id="PRU01030"/>
    </source>
</evidence>
<evidence type="ECO:0000255" key="18">
    <source>
        <dbReference type="PROSITE-ProRule" id="PRU01166"/>
    </source>
</evidence>
<evidence type="ECO:0000256" key="19">
    <source>
        <dbReference type="SAM" id="MobiDB-lite"/>
    </source>
</evidence>
<evidence type="ECO:0000305" key="20"/>
<name>POLG_HCVK3</name>
<organism>
    <name type="scientific">Hepatitis C virus genotype 3a (isolate k3a)</name>
    <name type="common">HCV</name>
    <dbReference type="NCBI Taxonomy" id="356416"/>
    <lineage>
        <taxon>Viruses</taxon>
        <taxon>Riboviria</taxon>
        <taxon>Orthornavirae</taxon>
        <taxon>Kitrinoviricota</taxon>
        <taxon>Flasuviricetes</taxon>
        <taxon>Amarillovirales</taxon>
        <taxon>Flaviviridae</taxon>
        <taxon>Hepacivirus</taxon>
        <taxon>Hepacivirus hominis</taxon>
    </lineage>
</organism>
<protein>
    <recommendedName>
        <fullName>Genome polyprotein</fullName>
    </recommendedName>
    <component>
        <recommendedName>
            <fullName>Core protein precursor</fullName>
        </recommendedName>
        <alternativeName>
            <fullName>Capsid protein C</fullName>
        </alternativeName>
        <alternativeName>
            <fullName>p23</fullName>
        </alternativeName>
    </component>
    <component>
        <recommendedName>
            <fullName>Mature core protein</fullName>
        </recommendedName>
        <alternativeName>
            <fullName>p21</fullName>
        </alternativeName>
    </component>
    <component>
        <recommendedName>
            <fullName>Envelope glycoprotein E1</fullName>
        </recommendedName>
        <alternativeName>
            <fullName>gp32</fullName>
        </alternativeName>
        <alternativeName>
            <fullName>gp35</fullName>
        </alternativeName>
    </component>
    <component>
        <recommendedName>
            <fullName>Envelope glycoprotein E2</fullName>
        </recommendedName>
        <alternativeName>
            <fullName>NS1</fullName>
        </alternativeName>
        <alternativeName>
            <fullName>gp68</fullName>
        </alternativeName>
        <alternativeName>
            <fullName>gp70</fullName>
        </alternativeName>
    </component>
    <component>
        <recommendedName>
            <fullName>Viroporin p7</fullName>
        </recommendedName>
    </component>
    <component>
        <recommendedName>
            <fullName>Protease NS2</fullName>
            <shortName>p23</shortName>
            <ecNumber evidence="3">3.4.22.-</ecNumber>
        </recommendedName>
        <alternativeName>
            <fullName>Non-structural protein 2</fullName>
            <shortName>NS2</shortName>
        </alternativeName>
    </component>
    <component>
        <recommendedName>
            <fullName>Serine protease/helicase NS3</fullName>
            <ecNumber evidence="5">3.4.21.98</ecNumber>
            <ecNumber evidence="5">3.6.1.15</ecNumber>
            <ecNumber evidence="5">3.6.4.13</ecNumber>
        </recommendedName>
        <alternativeName>
            <fullName>Hepacivirin</fullName>
        </alternativeName>
        <alternativeName>
            <fullName evidence="5">NS3 helicase</fullName>
        </alternativeName>
        <alternativeName>
            <fullName evidence="5">NS3 protease</fullName>
        </alternativeName>
        <alternativeName>
            <fullName>NS3P</fullName>
        </alternativeName>
        <alternativeName>
            <fullName>Viroporin p70</fullName>
        </alternativeName>
    </component>
    <component>
        <recommendedName>
            <fullName>Non-structural protein 4A</fullName>
            <shortName>NS4A</shortName>
        </recommendedName>
        <alternativeName>
            <fullName>p8</fullName>
        </alternativeName>
    </component>
    <component>
        <recommendedName>
            <fullName>Non-structural protein 4B</fullName>
            <shortName>NS4B</shortName>
        </recommendedName>
        <alternativeName>
            <fullName>p27</fullName>
        </alternativeName>
    </component>
    <component>
        <recommendedName>
            <fullName>Non-structural protein 5A</fullName>
            <shortName>NS5A</shortName>
        </recommendedName>
        <alternativeName>
            <fullName>p56/58</fullName>
        </alternativeName>
    </component>
    <component>
        <recommendedName>
            <fullName>RNA-directed RNA polymerase</fullName>
            <ecNumber evidence="5">2.7.7.48</ecNumber>
        </recommendedName>
        <alternativeName>
            <fullName>NS5B</fullName>
        </alternativeName>
        <alternativeName>
            <fullName>p68</fullName>
        </alternativeName>
    </component>
</protein>
<comment type="function">
    <molecule>Mature core protein</molecule>
    <text evidence="2 4 5 6 11 20">Packages viral RNA to form a viral nucleocapsid, and promotes virion budding (Probable). Participates in the viral particle production as a result of its interaction with the non-structural protein 5A (By similarity). Binds RNA and may function as a RNA chaperone to induce the RNA structural rearrangements taking place during virus replication (By similarity). Modulates viral translation initiation by interacting with viral IRES and 40S ribosomal subunit (By similarity). Affects various cell signaling pathways, host immunity and lipid metabolism (Probable). Prevents the establishment of cellular antiviral state by blocking the interferon-alpha/beta (IFN-alpha/beta) and IFN-gamma signaling pathways and by blocking the formation of phosphorylated STAT1 and promoting ubiquitin-mediated proteasome-dependent degradation of STAT1 (By similarity). Activates STAT3 leading to cellular transformation (By similarity). Regulates the activity of cellular genes, including c-myc and c-fos (By similarity). May repress the promoter of p53, and sequester CREB3 and SP110 isoform 3/Sp110b in the cytoplasm (By similarity). Represses cell cycle negative regulating factor CDKN1A, thereby interrupting an important check point of normal cell cycle regulation (By similarity). Targets transcription factors involved in the regulation of inflammatory responses and in the immune response: suppresses TNF-induced NF-kappa-B activation, and activates AP-1 (By similarity). Binds to dendritic cells (DCs) via C1QR1, resulting in down-regulation of T-lymphocytes proliferation (By similarity). Alters lipid metabolism by interacting with hepatocellular proteins involved in lipid accumulation and storage (By similarity). Induces up-regulation of FAS promoter activity, and thereby contributes to the increased triglyceride accumulation in hepatocytes (steatosis) (By similarity).</text>
</comment>
<comment type="function">
    <molecule>Envelope glycoprotein E1</molecule>
    <text evidence="5">Forms a heterodimer with envelope glycoprotein E2, which mediates virus attachment to the host cell, virion internalization through clathrin-dependent endocytosis and fusion with host membrane (By similarity). Fusion with the host cell is most likely mediated by both E1 and E2, through conformational rearrangements of the heterodimer required for fusion rather than a classical class II fusion mechanism (By similarity). E1/E2 heterodimer binds host apolipoproteins such as APOB and ApoE thereby forming a lipo-viro-particle (LVP) (By similarity). APOE associated to the LVP allows the initial virus attachment to cell surface receptors such as the heparan sulfate proteoglycans (HSPGs), syndecan-1 (SDC1), syndecan-1 (SDC2), the low-density lipoprotein receptor (LDLR) and scavenger receptor class B type I (SCARB1) (By similarity). The cholesterol transfer activity of SCARB1 allows E2 exposure and binding of E2 to SCARB1 and the tetraspanin CD81 (By similarity). E1/E2 heterodimer binding on CD81 activates the epithelial growth factor receptor (EGFR) signaling pathway (By similarity). Diffusion of the complex E1-E2-EGFR-SCARB1-CD81 to the cell lateral membrane allows further interaction with Claudin 1 (CLDN1) and occludin (OCLN) to finally trigger HCV entry (By similarity).</text>
</comment>
<comment type="function">
    <molecule>Envelope glycoprotein E2</molecule>
    <text evidence="4 5">Forms a heterodimer with envelope glycoprotein E1, which mediates virus attachment to the host cell, virion internalization through clathrin-dependent endocytosis and fusion with host membrane (By similarity). Fusion with the host cell is most likely mediated by both E1 and E2, through conformational rearrangements of the heterodimer required for fusion rather than a classical class II fusion mechanism (By similarity). The interaction between envelope glycoprotein E2 and host apolipoprotein E/APOE allows the proper assembly, maturation and infectivity of the viral particles (By similarity). This interaction is probably promoted via the up-regulation of cellular autophagy by the virus (By similarity). E1/E2 heterodimer binds host apolipoproteins such as APOB and APOE thereby forming a lipo-viro-particle (LVP) (By similarity). APOE associated to the LVP allows the initial virus attachment to cell surface receptors such as the heparan sulfate proteoglycans (HSPGs), syndecan-1 (SDC1), syndecan-1 (SDC2), the low-density lipoprotein receptor (LDLR) and scavenger receptor class B type I (SCARB1) (By similarity). The cholesterol transfer activity of SCARB1 allows E2 exposure and binding of E2 to SCARB1 and the tetraspanin CD81 (By similarity). E1/E2 heterodimer binding on CD81 activates the epithelial growth factor receptor (EGFR) signaling pathway (By similarity). Diffusion of the complex E1-E2-EGFR-SCARB1-CD81 to the cell lateral membrane allows further interaction with Claudin 1 (CLDN1) and occludin (OCLN) to finally trigger HCV entry (By similarity). Inhibits host EIF2AK2/PKR activation, preventing the establishment of an antiviral state (By similarity). Viral ligand for CD209/DC-SIGN and CLEC4M/DC-SIGNR, which are respectively found on dendritic cells (DCs), and on liver sinusoidal endothelial cells and macrophage-like cells of lymph node sinuses (By similarity). These interactions allow the capture of circulating HCV particles by these cells and subsequent facilitated transmission to permissive cells such as hepatocytes and lymphocyte subpopulations (By similarity). The interaction between E2 and host amino acid transporter complex formed by SLC3A2 and SLC7A5/LAT1 may facilitate viral entry into host cell (By similarity).</text>
</comment>
<comment type="function">
    <molecule>Viroporin p7</molecule>
    <text evidence="5 11 20">Ion channel protein that acts as a viroporin and plays an essential role in the assembly, envelopment and secretion of viral particles (By similarity). Regulates the host cell secretory pathway, which induces the intracellular retention of viral glycoproteins and favors assembly of viral particles (By similarity). Creates a pore in acidic organelles and releases Ca(2+) and H(+) in the cytoplasm of infected cells, leading to a productive viral infection (By similarity). High levels of cytoplasmic Ca(2+) may trigger membrane trafficking and transport of viral ER-associated proteins to viroplasms, sites of viral genome replication (Probable). This ionic imbalance induces the assembly of the inflammasome complex, which triggers the maturation of pro-IL-1beta into IL-1beta through the action of caspase-1 (By similarity). Targets also host mitochondria and induces mitochondrial depolarization (By similarity). In addition of its role as a viroporin, acts as a lipid raft adhesion factor (By similarity).</text>
</comment>
<comment type="function">
    <molecule>Protease NS2</molecule>
    <text evidence="3 5">Cysteine protease required for the proteolytic auto-cleavage between the non-structural proteins NS2 and NS3 (By similarity). The N-terminus of NS3 is required for the function of NS2 protease (active region NS2-3) (By similarity). Promotes the initiation of viral particle assembly by mediating the interaction between structural and non-structural proteins (By similarity).</text>
</comment>
<comment type="function">
    <molecule>Serine protease/helicase NS3</molecule>
    <text evidence="5 12">Displays three enzymatic activities: serine protease with a chymotrypsin-like fold, NTPase and RNA helicase (By similarity). NS3 serine protease, in association with NS4A, is responsible for the cleavages of NS3-NS4A, NS4A-NS4B, NS4B-NS5A and NS5A-NS5B (By similarity). The NS3/NS4A complex prevents phosphorylation of host IRF3, thus preventing the establishment of dsRNA induced antiviral state (By similarity). The NS3/NS4A complex induces host amino acid transporter component SLC3A2, thus contributing to HCV propagation (By similarity). NS3 RNA helicase binds to RNA and unwinds both dsDNA and dsRNA in the 3' to 5' direction, and likely resolves RNA complicated stable secondary structures in the template strand (By similarity). Binds a single ATP and catalyzes the unzipping of a single base pair of dsRNA (By similarity). Inhibits host antiviral proteins TBK1 and IRF3 thereby preventing the establishment of an antiviral state (By similarity). Cleaves host MAVS/CARDIF thereby preventing the establishment of an antiviral state (By similarity). Cleaves host TICAM1/TRIF, thereby disrupting TLR3 signaling and preventing the establishment of an antiviral state (By similarity).</text>
</comment>
<comment type="function">
    <molecule>Non-structural protein 4A</molecule>
    <text evidence="5 12">Peptide cofactor which forms a non-covalent complex with the N-terminal of NS3 serine protease (By similarity). The NS3/NS4A complex prevents phosphorylation of host IRF3, thus preventing the establishment of dsRNA induced antiviral state (By similarity). The NS3/NS4A complex induces host amino acid transporter component SLC3A2, thus contributing to HCV propagation (By similarity).</text>
</comment>
<comment type="function">
    <molecule>Non-structural protein 4B</molecule>
    <text evidence="5">Induces a specific membrane alteration that serves as a scaffold for the virus replication complex (By similarity). This membrane alteration gives rise to the so-called ER-derived membranous web that contains the replication complex (By similarity). NS4B self-interaction contributes to its function in membranous web formation (By similarity). Promotes host TRIF protein degradation in a CASP8-dependent manner thereby inhibiting host TLR3-mediated interferon signaling (By similarity). Disrupts the interaction between STING and TBK1 contributing to the inhibition of interferon signaling (By similarity).</text>
</comment>
<comment type="function">
    <molecule>Non-structural protein 5A</molecule>
    <text evidence="2 4 5 11 12">Phosphorylated protein that is indispensable for viral replication and assembly (By similarity). Both hypo- and hyperphosphorylated states are required for the viral life cycle (By similarity). The hyperphosphorylated form of NS5A is an inhibitor of viral replication (By similarity). Involved in RNA-binding and especially in binding to the viral genome (By similarity). Zinc is essential for RNA-binding (By similarity). Participates in the viral particle production as a result of its interaction with the mature viral core protein (By similarity). Its interaction with host VAPB may target the viral replication complex to vesicles (By similarity). Down-regulates viral IRES translation initiation (By similarity). Mediates interferon resistance, presumably by interacting with and inhibiting host EIF2AK2/PKR (By similarity). Prevents BIN1-induced apoptosis (By similarity). Acts as a transcriptional activator of some host genes important for viral replication when localized in the nucleus (By similarity). Via the interaction with host PACSIN2, modulates lipid droplet formation in order to promote virion assembly (By similarity). Modulates TNFRSF21/DR6 signaling pathway for viral propagation (By similarity).</text>
</comment>
<comment type="function">
    <molecule>RNA-directed RNA polymerase</molecule>
    <text evidence="5">RNA-dependent RNA polymerase that performs primer-template recognition and RNA synthesis during viral replication. Initiates RNA transcription/replication at a flavin adenine dinucleotide (FAD), resulting in a 5'- FAD cap on viral RNAs. In this way, recognition of viral 5' RNA by host pattern recognition receptors can be bypassed, thereby evading activation of antiviral pathways.</text>
</comment>
<comment type="catalytic activity">
    <molecule>Serine protease/helicase NS3</molecule>
    <reaction evidence="5">
        <text>Hydrolysis of four peptide bonds in the viral precursor polyprotein, commonly with Asp or Glu in the P6 position, Cys or Thr in P1 and Ser or Ala in P1'.</text>
        <dbReference type="EC" id="3.4.21.98"/>
    </reaction>
</comment>
<comment type="catalytic activity">
    <molecule>Serine protease/helicase NS3</molecule>
    <reaction evidence="5">
        <text>a ribonucleoside 5'-triphosphate + H2O = a ribonucleoside 5'-diphosphate + phosphate + H(+)</text>
        <dbReference type="Rhea" id="RHEA:23680"/>
        <dbReference type="ChEBI" id="CHEBI:15377"/>
        <dbReference type="ChEBI" id="CHEBI:15378"/>
        <dbReference type="ChEBI" id="CHEBI:43474"/>
        <dbReference type="ChEBI" id="CHEBI:57930"/>
        <dbReference type="ChEBI" id="CHEBI:61557"/>
        <dbReference type="EC" id="3.6.1.15"/>
    </reaction>
</comment>
<comment type="catalytic activity">
    <molecule>Serine protease/helicase NS3</molecule>
    <reaction evidence="5">
        <text>ATP + H2O = ADP + phosphate + H(+)</text>
        <dbReference type="Rhea" id="RHEA:13065"/>
        <dbReference type="ChEBI" id="CHEBI:15377"/>
        <dbReference type="ChEBI" id="CHEBI:15378"/>
        <dbReference type="ChEBI" id="CHEBI:30616"/>
        <dbReference type="ChEBI" id="CHEBI:43474"/>
        <dbReference type="ChEBI" id="CHEBI:456216"/>
        <dbReference type="EC" id="3.6.4.13"/>
    </reaction>
</comment>
<comment type="catalytic activity">
    <molecule>RNA-directed RNA polymerase</molecule>
    <reaction evidence="14">
        <text>RNA(n) + a ribonucleoside 5'-triphosphate = RNA(n+1) + diphosphate</text>
        <dbReference type="Rhea" id="RHEA:21248"/>
        <dbReference type="Rhea" id="RHEA-COMP:14527"/>
        <dbReference type="Rhea" id="RHEA-COMP:17342"/>
        <dbReference type="ChEBI" id="CHEBI:33019"/>
        <dbReference type="ChEBI" id="CHEBI:61557"/>
        <dbReference type="ChEBI" id="CHEBI:140395"/>
        <dbReference type="EC" id="2.7.7.48"/>
    </reaction>
</comment>
<comment type="cofactor">
    <molecule>Protease NS2</molecule>
    <cofactor evidence="3">
        <name>Zn(2+)</name>
        <dbReference type="ChEBI" id="CHEBI:29105"/>
    </cofactor>
    <text evidence="3">Activity of protease NS2 is dependent on zinc ions and completely inhibited by EDTA. This is probably due to the fact that NS2 protease activity needs NS3 N-terminus that binds a zinc atom (active region NS2-3).</text>
</comment>
<comment type="cofactor">
    <molecule>Serine protease/helicase NS3</molecule>
    <cofactor evidence="3">
        <name>Zn(2+)</name>
        <dbReference type="ChEBI" id="CHEBI:29105"/>
    </cofactor>
    <cofactor evidence="12">
        <name>Mg(2+)</name>
        <dbReference type="ChEBI" id="CHEBI:18420"/>
    </cofactor>
    <text evidence="3 12">Binds 1 zinc ion, which has a structural role (By similarity). The magnesium ion is essential for the helicase activity (By similarity).</text>
</comment>
<comment type="cofactor">
    <molecule>RNA-directed RNA polymerase</molecule>
    <cofactor evidence="3">
        <name>Mg(2+)</name>
        <dbReference type="ChEBI" id="CHEBI:18420"/>
    </cofactor>
    <text evidence="3">Binds 2 magnesium ion that constitute a dinuclear catalytic metal center.</text>
</comment>
<comment type="activity regulation">
    <molecule>Viroporin p7</molecule>
    <text evidence="2 5">Inhibited by the antiviral drug hexamethylene amiloride (By similarity). Inhibition by amantadine appears to be genotype-dependent (By similarity). Also inhibited by long-alkyl-chain iminosugar derivatives (By similarity).</text>
</comment>
<comment type="activity regulation">
    <molecule>RNA-directed RNA polymerase</molecule>
    <text evidence="5">Activity is up-regulated by PRK2/PKN2-mediated phosphorylation.</text>
</comment>
<comment type="subunit">
    <molecule>Mature core protein</molecule>
    <text evidence="2 4 5 6 8 9 11">Homooligomer (By similarity). Interacts with E1 (via C-terminus) (By similarity). Interacts with the non-structural protein 5A (By similarity). Interacts (via N-terminus) with host STAT1 (via SH2 domain); this interaction results in decreased STAT1 phosphorylation and ubiquitin-mediated proteasome-dependent STAT1 degradation, leading to decreased IFN-stimulated gene transcription (By similarity). Interacts with host STAT3; this interaction constitutively activates STAT3 (By similarity). Interacts with host LTBR receptor (By similarity). Interacts with host TNFRSF1A receptor and possibly induces apoptosis (By similarity). Interacts with host HNRPK (By similarity). Interacts with host YWHAE (By similarity). Interacts with host UBE3A/E6AP (By similarity). Interacts with host DDX3X (By similarity). Interacts with host APOA2 (By similarity). Interacts with host RXRA protein (By similarity). Interacts with host SP110 isoform 3/Sp110b; this interaction sequesters the transcriptional corepressor SP110 away from the nucleus (By similarity). Interacts with host CREB3 nuclear transcription protein; this interaction triggers cell transformation (By similarity). Interacts with host ACY3 (By similarity). Interacts with host C1QR1 (By similarity). Interacts with host RBM24; this interaction, which enhances the interaction of the mature core protein with 5'-UTR, may inhibit viral translation and favor replication (By similarity). Interacts with host EIF2AK2/PKR; this interaction induces the autophosphorylation of EIF2AK2 (By similarity). Part of the viral assembly initiation complex composed of NS2, E1, E2, NS3, NS4A, NS5A and the mature core protein (By similarity).</text>
</comment>
<comment type="subunit">
    <molecule>Envelope glycoprotein E1</molecule>
    <text evidence="5 11">Forms a heterodimer with envelope glycoprotein E2 (By similarity). Interacts with mature core protein (By similarity). Interacts with protease NS2 (By similarity). The heterodimer E1/E2 interacts with host CLDN1; this interaction plays a role in viral entry into host cell (By similarity). Interacts with host SPSB2 (via C-terminus) (By similarity). Part of the viral assembly initiation complex composed of NS2, E1, E2, NS3, NS4A, NS5A and the mature core protein (By similarity). Interacts with host NEURL3; this interaction prevents E1 binding to glycoprotein E2 (By similarity).</text>
</comment>
<comment type="subunit">
    <molecule>Envelope glycoprotein E2</molecule>
    <text evidence="5 11 12">Forms a heterodimer with envelope glycoprotein E1 (By similarity). Interacts with host CD81 and SCARB1 receptors; these interactions play a role in viral entry into host cell (By similarity). Interacts with host EIF2AK2/PKR; this interaction inhibits EIF2AK2 and probably allows the virus to evade the innate immune response (By similarity). Interacts with host CD209/DC-SIGN and CLEC4M/DC-SIGNR (By similarity). Interact with host SPCS1; this interaction is essential for viral particle assembly (By similarity). Interacts with protease NS2 (By similarity). The heterodimer E1/E2 interacts with host CLDN1; this interaction plays a role in viral entry into host cell (By similarity). Part of the viral assembly initiation complex composed of NS2, E1, E2, NS3, NS4A, NS5A and the mature core protein (By similarity). Interacts with host SLC3A2/4F2hc; the interaction may facilitate viral entry into host cell (By similarity). Interacts with human PLSCR1 (By similarity).</text>
</comment>
<comment type="subunit">
    <molecule>Viroporin p7</molecule>
    <text evidence="1 5 11">Homohexamer (By similarity). Homoheptamer (By similarity). Interacts with protease NS2 (By similarity).</text>
</comment>
<comment type="subunit">
    <molecule>Protease NS2</molecule>
    <text evidence="5 11">Homodimer (By similarity). Interacts with host SPCS1; this interaction is essential for viral particle assembly (By similarity). Interacts with envelope glycoprotein E1 (By similarity). Interacts with envelope glycoprotein E2 (By similarity). Interacts with viroporin p7 (By similarity). Interacts with serine protease/helicase NS3 (By similarity). Part of the replication complex composed of NS2, NS3, NS4A, NS4B, NS5A and the RNA-directed RNA polymerase embedded in an ER-derived membranous web (By similarity). Part of the viral assembly initiation complex composed of NS2, E1, E2, NS3, NS4A, NS5A and the mature core protein (By similarity).</text>
</comment>
<comment type="subunit">
    <molecule>Serine protease/helicase NS3</molecule>
    <text evidence="3 5 11 12">Interacts with protease NS2 (By similarity). Interacts with non-structural protein 4A; this interaction stabilizes the folding of NS3 serine protease (By similarity). NS3-NS4A interaction is essential for NS3 activation and allows membrane anchorage of the latter (By similarity). NS3/NS4A complex also prevents phosphorylation of host IRF3, thus preventing the establishment of dsRNA induced antiviral state (By similarity). Interacts with host MAVS; this interaction leads to the cleavage and inhibition of host MAVS (By similarity). Interacts with host TICAM1; this interaction leads to the cleavage and inhibition of host TICAM1 (By similarity). Interacts with host TANK-binding kinase/TBK1; this interaction results in the inhibition of the association between TBK1 and IRF3, which leads to the inhibition of IRF3 activation (By similarity). Interacts with host RBM24 (By similarity). Part of the replication complex composed of NS2, NS3, NS4A, NS4B, NS5A and the RNA-directed RNA polymerase embedded in an ER-derived membranous web (By similarity). Part of the viral assembly initiation complex composed of NS2, E1, E2, NS3, NS4A, NS5A and the mature core protein (By similarity).</text>
</comment>
<comment type="subunit">
    <molecule>Non-structural protein 4A</molecule>
    <text evidence="2 3 5 11">Interacts with NS3 serine protease; this interaction stabilizes the folding of NS3 serine protease (By similarity). NS3-NS4A interaction is essential for NS3 activation and allows membrane anchorage of the latter (By similarity). Interacts with non-structural protein 5A (via N-terminus) (By similarity). Part of the replication complex composed of NS2, NS3, NS4A, NS4B, NS5A and the RNA-directed RNA polymerase embedded in an ER-derived membranous web (By similarity). Part of the viral assembly initiation complex composed of NS2, E1, E2, NS3, NS4A, NS5A and the mature core protein (By similarity).</text>
</comment>
<comment type="subunit">
    <molecule>Non-structural protein 4B</molecule>
    <text evidence="5 11">Homomultimer (By similarity). Interacts with non-structural protein NS5A (By similarity). Interacts with host PLA2G4C; this interaction likely initiates the recruitment of replication complexes to lipid droplets (By similarity). Interacts with host STING; this interaction disrupts the interaction between STING and TBK1 thereby suppressing the interferon signaling (By similarity). Part of the replication complex composed of NS2, NS3, NS4A, NS4B, NS5A and the RNA-directed RNA polymerase embedded in an ER-derived membranous web (By similarity).</text>
</comment>
<comment type="subunit">
    <molecule>Non-structural protein 5A</molecule>
    <text evidence="2 3 4 5 11">Monomer. Homodimer; dimerization is required for RNA-binding (By similarity). Interacts with the mature core protein (By similarity). Interacts (via N-terminus) with non-structural protein 4A (By similarity). Interacts with non-structural protein 4B. Interacts (via region D2) with RNA-directed RNA polymerase (By similarity). Part of the viral assembly initiation complex composed of NS2, E1, E2, NS3, NS4A, NS5A and the mature core protein (By similarity). Part of the replication complex composed of NS2, NS3, NS4A, NS4B, NS5A and the RNA-directed RNA polymerase embedded in an ER-derived membranous web (By similarity). Interacts with host GRB2 (By similarity). Interacts with host BIN1 (By similarity). Interacts with host PIK3R1 (By similarity). Interacts with host SRCAP (By similarity). Interacts with host FKBP8 (By similarity). Interacts (via C-terminus) with host VAPB (via MSP domain). Interacts with host EIF2AK2/PKR; this interaction leads to disruption of EIF2AK2 dimerization by NS5A and probably allows the virus to evade the innate immune response. Interacts (via N-terminus) with host PACSIN2 (via N-terminus); this interaction attenuates protein kinase C alpha-mediated phosphorylation of PACSIN2 by disrupting the interaction between PACSIN2 and PRKCA (By similarity). Interacts (via N-terminus) with host SRC kinase (via SH2 domain) (By similarity). Interacts with most Src-family kinases (By similarity). Interacts with host IFI27 and SKP2; promotes the ubiquitin-mediated proteasomal degradation of NS5A (By similarity). Interacts with host GPS2 (By similarity). Interacts with host TNFRSF21; this interaction allows the modulation by the virus of JNK, p38 MAPK, STAT3, and Akt signaling pathways in a DR6-dependent manner. Interacts (via N-terminus) with host CIDEB (via N-terminus); this interaction seems to regulate the association of HCV particles with APOE (By similarity). Interacts with host CHKA/Choline Kinase-alpha; CHKA bridges host PI4KA and NS5A and potentiates NS5A-stimulated PI4KA activity, which then facilitates the targeting of the ternary complex to the ER for viral replication (By similarity). Interacts with host SPSB2 (via C-terminus); this interaction targets NS5A for ubiquitination and degradation (By similarity). Interacts with host RAB18; this interaction may promote the association of NS5A and other replicase components with lipid droplets (By similarity). Interacts (via region D2) with host PPIA/CYPA; the interaction stimulates RNA-binding ability of NS5A and is dependent on the peptidyl-prolyl cis-trans isomerase activity of PPIA/CYPA. Interacts with host TRIM14; this interaction induces the degradation of NS5A (By similarity).</text>
</comment>
<comment type="subunit">
    <molecule>RNA-directed RNA polymerase</molecule>
    <text evidence="5">Homooligomer (By similarity). Interacts with non-structural protein 5A (By similarity). Interacts with host VAPB (By similarity). Interacts with host PRK2/PKN2 (By similarity). Interacts with host HNRNPA1 and SEPT6; these interactions facilitate viral replication (By similarity). Part of the replication complex composed of NS2, NS3, NS4A, NS4B, NS5A and the RNA-directed RNA polymerase (By similarity).</text>
</comment>
<comment type="subcellular location">
    <molecule>Core protein precursor</molecule>
    <subcellularLocation>
        <location evidence="4">Host endoplasmic reticulum membrane</location>
        <topology evidence="13">Single-pass membrane protein</topology>
    </subcellularLocation>
    <subcellularLocation>
        <location evidence="4">Host mitochondrion membrane</location>
        <topology evidence="13">Single-pass type I membrane protein</topology>
    </subcellularLocation>
    <text>The C-terminal transmembrane domain of the core protein precursor contains an ER signal leading the nascent polyprotein to the ER membrane.</text>
</comment>
<comment type="subcellular location">
    <molecule>Mature core protein</molecule>
    <subcellularLocation>
        <location evidence="11">Virion</location>
    </subcellularLocation>
    <subcellularLocation>
        <location evidence="11">Host cytoplasm</location>
    </subcellularLocation>
    <subcellularLocation>
        <location evidence="2">Host nucleus</location>
    </subcellularLocation>
    <subcellularLocation>
        <location evidence="11">Host lipid droplet</location>
    </subcellularLocation>
    <text evidence="5">Only a minor proportion of core protein is present in the nucleus (By similarity). Probably present on the surface of lipid droplets (By similarity).</text>
</comment>
<comment type="subcellular location">
    <molecule>Envelope glycoprotein E1</molecule>
    <subcellularLocation>
        <location evidence="20">Virion membrane</location>
        <topology evidence="20">Single-pass type I membrane protein</topology>
    </subcellularLocation>
    <subcellularLocation>
        <location>Host endoplasmic reticulum membrane</location>
        <topology evidence="5">Single-pass type I membrane protein</topology>
    </subcellularLocation>
    <text evidence="5">The C-terminal transmembrane domain acts as a signal sequence and forms a hairpin structure before cleavage by host signal peptidase (By similarity). After cleavage, the membrane sequence is retained at the C-terminus of the protein, serving as ER membrane anchor (By similarity). A reorientation of the second hydrophobic stretch occurs after cleavage producing a single reoriented transmembrane domain (By similarity). These events explain the final topology of the protein (By similarity).</text>
</comment>
<comment type="subcellular location">
    <molecule>Envelope glycoprotein E2</molecule>
    <subcellularLocation>
        <location evidence="20">Virion membrane</location>
        <topology evidence="20">Single-pass type I membrane protein</topology>
    </subcellularLocation>
    <subcellularLocation>
        <location>Host endoplasmic reticulum membrane</location>
        <topology evidence="5">Single-pass type I membrane protein</topology>
    </subcellularLocation>
    <subcellularLocation>
        <location evidence="12">Host lipid droplet</location>
    </subcellularLocation>
    <text evidence="5">The C-terminal transmembrane domain acts as a signal sequence and forms a hairpin structure before cleavage by host signal peptidase (By similarity). After cleavage, the membrane sequence is retained at the C-terminus of the protein, serving as ER membrane anchor (By similarity). A reorientation of the second hydrophobic stretch occurs after cleavage producing a single reoriented transmembrane domain (By similarity). These events explain the final topology of the protein (By similarity).</text>
</comment>
<comment type="subcellular location">
    <molecule>Viroporin p7</molecule>
    <subcellularLocation>
        <location evidence="5">Host endoplasmic reticulum membrane</location>
        <topology evidence="5">Multi-pass membrane protein</topology>
    </subcellularLocation>
    <subcellularLocation>
        <location evidence="5">Host mitochondrion</location>
    </subcellularLocation>
    <subcellularLocation>
        <location evidence="5">Host cell membrane</location>
    </subcellularLocation>
    <text evidence="5">The C-terminus of p7 membrane domain acts as a signal sequence (By similarity). After cleavage by host signal peptidase, the membrane sequence is retained at the C-terminus of the protein, serving as ER membrane anchor (By similarity). ER retention of p7 is leaky and a small fraction reaches the plasma membrane (By similarity).</text>
</comment>
<comment type="subcellular location">
    <molecule>Protease NS2</molecule>
    <subcellularLocation>
        <location evidence="5">Host endoplasmic reticulum membrane</location>
        <topology evidence="5">Multi-pass membrane protein</topology>
    </subcellularLocation>
    <subcellularLocation>
        <location evidence="12">Host lipid droplet</location>
    </subcellularLocation>
    <text evidence="11">Probably present on the surface of lipid droplets.</text>
</comment>
<comment type="subcellular location">
    <molecule>Serine protease/helicase NS3</molecule>
    <subcellularLocation>
        <location evidence="20">Host endoplasmic reticulum membrane</location>
        <topology evidence="20">Peripheral membrane protein</topology>
    </subcellularLocation>
    <text evidence="20">NS3 is associated to the ER membrane through its binding to NS4A.</text>
</comment>
<comment type="subcellular location">
    <molecule>Non-structural protein 4A</molecule>
    <subcellularLocation>
        <location evidence="20">Host endoplasmic reticulum membrane</location>
        <topology evidence="20">Single-pass type I membrane protein</topology>
    </subcellularLocation>
    <text>Host membrane insertion occurs after processing by the NS3 protease.</text>
</comment>
<comment type="subcellular location">
    <molecule>Non-structural protein 4B</molecule>
    <subcellularLocation>
        <location evidence="5">Host endoplasmic reticulum membrane</location>
        <topology evidence="5">Multi-pass membrane protein</topology>
    </subcellularLocation>
    <text evidence="5">A reorientation of the N-terminus into the ER lumen occurs post-translationally.</text>
</comment>
<comment type="subcellular location">
    <molecule>Non-structural protein 5A</molecule>
    <subcellularLocation>
        <location evidence="5">Host endoplasmic reticulum membrane</location>
        <topology evidence="5">Peripheral membrane protein</topology>
    </subcellularLocation>
    <subcellularLocation>
        <location evidence="5">Host cytoplasm</location>
        <location evidence="5">Host perinuclear region</location>
    </subcellularLocation>
    <subcellularLocation>
        <location evidence="2">Host mitochondrion</location>
    </subcellularLocation>
    <subcellularLocation>
        <location evidence="5">Host cytoplasm</location>
    </subcellularLocation>
    <subcellularLocation>
        <location evidence="2">Host nucleus</location>
    </subcellularLocation>
    <subcellularLocation>
        <location evidence="12">Host lipid droplet</location>
    </subcellularLocation>
    <text evidence="2 5">Host membrane insertion occurs after processing by the NS3 protease (By similarity). Localizes at the surface of lipid droplets (By similarity).</text>
</comment>
<comment type="subcellular location">
    <molecule>RNA-directed RNA polymerase</molecule>
    <subcellularLocation>
        <location evidence="5">Host cytoplasm</location>
    </subcellularLocation>
    <subcellularLocation>
        <location>Host endoplasmic reticulum membrane</location>
        <topology evidence="5">Single-pass type IV membrane protein</topology>
    </subcellularLocation>
    <text evidence="5">Host membrane insertion occurs after processing by the NS3 protease.</text>
</comment>
<comment type="domain">
    <molecule>Envelope glycoprotein E1</molecule>
    <text evidence="5">The transmembrane regions of envelope E1 and E2 glycoproteins are involved in heterodimer formation, ER localization, and assembly of these proteins.</text>
</comment>
<comment type="domain">
    <molecule>Envelope glycoprotein E2</molecule>
    <text evidence="3 5">The transmembrane regions of envelope E1 and E2 glycoproteins are involved in heterodimer formation, ER localization, and assembly of these proteins (By similarity). Envelope E2 glycoprotein contain two highly variable regions called hypervariable region 1 and 2 (HVR1 and HVR2) (By similarity). E2 also contain two segments involved in CD81-binding (By similarity). HVR1 is implicated in the SCARB1-mediated cell entry and probably acts as a regulator of the association of particles with lipids (By similarity).</text>
</comment>
<comment type="domain">
    <molecule>Protease NS2</molecule>
    <text evidence="3">The N-terminus of NS3 is required for the catalytic activity of protease NS2 (By similarity). The minimal catalytic region includes the C-terminus of NS2 and the N-terminus NS3 protease domain (active region NS2-3) (By similarity).</text>
</comment>
<comment type="domain">
    <molecule>Serine protease/helicase NS3</molecule>
    <text evidence="2 5">The N-terminal one-third contains the protease activity (By similarity). This region contains a zinc atom that does not belong to the active site, but may play a structural rather than a catalytic role (By similarity). This region is essential for the activity of protease NS2, maybe by contributing to the folding of the latter (By similarity). The NTPase/helicase activity is located in the twothirds C-terminus of NS3, this domain contains the NTPase and RNA-binding regions (By similarity).</text>
</comment>
<comment type="domain">
    <molecule>Non-structural protein 4B</molecule>
    <text evidence="11">Contains a glycine zipper region that critically contributes to the biogenesis of functional ER-derived replication organelles.</text>
</comment>
<comment type="domain">
    <molecule>Non-structural protein 5A</molecule>
    <text evidence="2 5">The N-terminus of NS5A acts as membrane anchor (By similarity). The central part of NS5A contains a variable region called interferon sensitivity determining region (ISDR) and seems to be intrinsically disordered and interacts with NS5B and host EIF2AK2 (By similarity). The C-terminus of NS5A contains a variable region called variable region 3 (V3) (By similarity). ISDR and V3 may be involved in sensitivity and/or resistance to IFN-alpha therapy (By similarity). The C-terminus contains a nuclear localization signal (By similarity). The SH3-binding domain is involved in the interaction with host BIN1, GRB2 and Src-family kinases (By similarity).</text>
</comment>
<comment type="PTM">
    <molecule>Genome polyprotein</molecule>
    <text evidence="4 5">Specific enzymatic cleavages in vivo yield mature proteins (By similarity). The structural proteins, core, E1, E2 and p7 are produced by proteolytic processing by host signal peptidases (By similarity). The core protein precursor is synthesized as a 23 kDa, which is retained in the ER membrane through the hydrophobic signal peptide (By similarity). Cleavage by the signal peptidase releases the 21 kDa mature core protein (By similarity). The cleavage of the core protein precursor occurs between aminoacids 176 and 188 but the exact cleavage site is not known (By similarity). Some degraded forms of the core protein appear as well during the course of infection (By similarity). The other proteins (p7, NS2, NS3, NS4A, NS4B, NS5A and NS5B) are cleaved by the viral proteases (By similarity). Autoprocessing between NS2 and NS3 is mediated by the NS2 cysteine protease catalytic domain and regulated by the NS3 N-terminal domain (By similarity).</text>
</comment>
<comment type="PTM">
    <molecule>Mature core protein</molecule>
    <text evidence="7">Phosphorylated by host PKC and PKA.</text>
</comment>
<comment type="PTM">
    <molecule>Mature core protein</molecule>
    <text evidence="8">Ubiquitinated; mediated by UBE3A and leading to core protein subsequent proteasomal degradation.</text>
</comment>
<comment type="PTM">
    <molecule>Envelope glycoprotein E1</molecule>
    <text evidence="5">Highly N-glycosylated.</text>
</comment>
<comment type="PTM">
    <molecule>Envelope glycoprotein E2</molecule>
    <text evidence="5">Highly N-glycosylated.</text>
</comment>
<comment type="PTM">
    <molecule>Protease NS2</molecule>
    <text evidence="5">Palmitoylation is required for NS2/3 autoprocessing and E2 recruitment to membranes.</text>
</comment>
<comment type="PTM">
    <molecule>Non-structural protein 4B</molecule>
    <text evidence="5">Palmitoylated. This modification may play a role in its polymerization or in protein-protein interactions.</text>
</comment>
<comment type="PTM">
    <molecule>Non-structural protein 5A</molecule>
    <text evidence="2 4">Phosphorylated on serines in a basal form termed p56 (By similarity). p58 is a hyperphosphorylated form of p56 (By similarity). p56 and p58 coexist in the cell in roughly equivalent amounts (By similarity). Hyperphosphorylation is dependent on the presence of NS4A (By similarity). Host CSNK1A1/CKI-alpha or RPS6KB1 kinases may be responsible for NS5A phosphorylation (By similarity).</text>
</comment>
<comment type="PTM">
    <molecule>Non-structural protein 5A</molecule>
    <text evidence="11">Tyrosine phosphorylation is essential for the interaction with host SRC.</text>
</comment>
<comment type="PTM">
    <molecule>Non-structural protein 5A</molecule>
    <text evidence="5">Ubiquitinated (By similarity). Ubiquitination, most probably at Lys-2356, mediated by host IFI27 and SKP2 leads to proteasomal degradation, restricting viral infection (By similarity). Ubiquitination by host TRIM22 leads to interruption of viral replication (By similarity).</text>
</comment>
<comment type="PTM">
    <molecule>RNA-directed RNA polymerase</molecule>
    <text evidence="2">The N-terminus is phosphorylated by host PRK2/PKN2.</text>
</comment>
<comment type="miscellaneous">
    <text evidence="20">Viral particle assembly takes place at the surface of ER-derived membranes in close proximity to lipid droplets. NS2 associates with E1/E2 glycoproteins, NS3 and NS5A, which interacts with the viral RNA and core protein to promote genome encapsidation. The nucleocapsid buds at the ER membrane where E1/E2 glycoproteins are anchored and afterward associate with nascent lipid droplet to acquire APOE and APOC. Secretion of viral particles is probably regulated by viroporin p7.</text>
</comment>
<comment type="miscellaneous">
    <molecule>Non-structural protein 5A</molecule>
    <text evidence="20">Cell culture adaptation of the virus leads to mutations in NS5A, reducing its inhibitory effect on replication.</text>
</comment>
<comment type="miscellaneous">
    <molecule>Mature core protein</molecule>
    <text evidence="2">Exerts viral interference on hepatitis B virus when HCV and HBV coinfect the same cell, by suppressing HBV gene expression, RNA encapsidation and budding.</text>
</comment>
<comment type="similarity">
    <text evidence="20">Belongs to the hepacivirus polyprotein family.</text>
</comment>
<comment type="caution">
    <text evidence="20">The core gene probably also codes for alternative reading frame proteins (ARFPs). Many functions depicted for the core protein might belong to the ARFPs.</text>
</comment>
<feature type="initiator methionine" description="Removed; by host" evidence="4">
    <location>
        <position position="1"/>
    </location>
</feature>
<feature type="chain" id="PRO_0000450921" description="Genome polyprotein">
    <location>
        <begin position="2"/>
        <end position="3021"/>
    </location>
</feature>
<feature type="chain" id="PRO_0000045640" description="Core protein precursor" evidence="13">
    <location>
        <begin position="2"/>
        <end position="191"/>
    </location>
</feature>
<feature type="chain" id="PRO_0000045641" description="Mature core protein">
    <location>
        <begin position="2"/>
        <end position="177"/>
    </location>
</feature>
<feature type="propeptide" id="PRO_0000045642" description="ER anchor for the core protein, removed in mature form by host signal peptidase">
    <location>
        <begin position="178"/>
        <end position="191"/>
    </location>
</feature>
<feature type="chain" id="PRO_0000045643" description="Envelope glycoprotein E1">
    <location>
        <begin position="192"/>
        <end position="383"/>
    </location>
</feature>
<feature type="chain" id="PRO_0000045644" description="Envelope glycoprotein E2">
    <location>
        <begin position="384"/>
        <end position="752"/>
    </location>
</feature>
<feature type="chain" id="PRO_0000045645" description="Viroporin p7">
    <location>
        <begin position="753"/>
        <end position="815"/>
    </location>
</feature>
<feature type="chain" id="PRO_0000045646" description="Protease NS2" evidence="17">
    <location>
        <begin position="816"/>
        <end position="1032"/>
    </location>
</feature>
<feature type="chain" id="PRO_0000045647" description="Serine protease/helicase NS3">
    <location>
        <begin position="1033"/>
        <end position="1663"/>
    </location>
</feature>
<feature type="chain" id="PRO_0000045648" description="Non-structural protein 4A">
    <location>
        <begin position="1664"/>
        <end position="1717"/>
    </location>
</feature>
<feature type="chain" id="PRO_0000045649" description="Non-structural protein 4B">
    <location>
        <begin position="1718"/>
        <end position="1978"/>
    </location>
</feature>
<feature type="chain" id="PRO_0000045650" description="Non-structural protein 5A">
    <location>
        <begin position="1979"/>
        <end position="2430"/>
    </location>
</feature>
<feature type="chain" id="PRO_0000045651" description="RNA-directed RNA polymerase">
    <location>
        <begin position="2431"/>
        <end position="3021"/>
    </location>
</feature>
<feature type="topological domain" description="Cytoplasmic" evidence="13">
    <location>
        <begin position="2"/>
        <end position="168"/>
    </location>
</feature>
<feature type="transmembrane region" description="Helical" evidence="13">
    <location>
        <begin position="169"/>
        <end position="189"/>
    </location>
</feature>
<feature type="topological domain" description="Lumenal" evidence="5">
    <location>
        <begin position="190"/>
        <end position="358"/>
    </location>
</feature>
<feature type="transmembrane region" description="Helical" evidence="5">
    <location>
        <begin position="359"/>
        <end position="379"/>
    </location>
</feature>
<feature type="topological domain" description="Lumenal" evidence="5">
    <location>
        <begin position="380"/>
        <end position="731"/>
    </location>
</feature>
<feature type="transmembrane region" description="Helical" evidence="5">
    <location>
        <begin position="732"/>
        <end position="752"/>
    </location>
</feature>
<feature type="topological domain" description="Lumenal" evidence="5">
    <location>
        <begin position="753"/>
        <end position="763"/>
    </location>
</feature>
<feature type="transmembrane region" description="Helical" evidence="5">
    <location>
        <begin position="764"/>
        <end position="784"/>
    </location>
</feature>
<feature type="topological domain" description="Cytoplasmic" evidence="5">
    <location>
        <begin position="785"/>
        <end position="787"/>
    </location>
</feature>
<feature type="transmembrane region" description="Helical" evidence="5">
    <location>
        <begin position="788"/>
        <end position="809"/>
    </location>
</feature>
<feature type="topological domain" description="Lumenal" evidence="5">
    <location>
        <begin position="810"/>
        <end position="819"/>
    </location>
</feature>
<feature type="transmembrane region" description="Helical" evidence="12">
    <location>
        <begin position="820"/>
        <end position="840"/>
    </location>
</feature>
<feature type="topological domain" description="Cytoplasmic" evidence="12">
    <location>
        <begin position="841"/>
        <end position="844"/>
    </location>
</feature>
<feature type="transmembrane region" description="Helical" evidence="12">
    <location>
        <begin position="845"/>
        <end position="864"/>
    </location>
</feature>
<feature type="topological domain" description="Lumenal" evidence="12">
    <location>
        <begin position="865"/>
        <end position="887"/>
    </location>
</feature>
<feature type="transmembrane region" description="Helical" evidence="12">
    <location>
        <begin position="888"/>
        <end position="908"/>
    </location>
</feature>
<feature type="topological domain" description="Cytoplasmic" evidence="12">
    <location>
        <begin position="909"/>
        <end position="1663"/>
    </location>
</feature>
<feature type="transmembrane region" description="Helical" evidence="13">
    <location>
        <begin position="1664"/>
        <end position="1684"/>
    </location>
</feature>
<feature type="topological domain" description="Cytoplasmic" evidence="13">
    <location>
        <begin position="1685"/>
        <end position="1811"/>
    </location>
</feature>
<feature type="transmembrane region" description="Helical" evidence="13">
    <location>
        <begin position="1812"/>
        <end position="1830"/>
    </location>
</feature>
<feature type="topological domain" description="Lumenal" evidence="5">
    <location>
        <begin position="1831"/>
        <end position="1834"/>
    </location>
</feature>
<feature type="transmembrane region" description="Helical" evidence="13">
    <location>
        <begin position="1835"/>
        <end position="1855"/>
    </location>
</feature>
<feature type="topological domain" description="Cytoplasmic" evidence="13">
    <location>
        <position position="1856"/>
    </location>
</feature>
<feature type="transmembrane region" description="Helical" evidence="13">
    <location>
        <begin position="1857"/>
        <end position="1877"/>
    </location>
</feature>
<feature type="topological domain" description="Lumenal" evidence="13">
    <location>
        <begin position="1878"/>
        <end position="1887"/>
    </location>
</feature>
<feature type="transmembrane region" description="Helical" evidence="13">
    <location>
        <begin position="1888"/>
        <end position="1908"/>
    </location>
</feature>
<feature type="topological domain" description="Cytoplasmic" evidence="13">
    <location>
        <begin position="1909"/>
        <end position="1978"/>
    </location>
</feature>
<feature type="intramembrane region" evidence="5">
    <location>
        <begin position="1979"/>
        <end position="2008"/>
    </location>
</feature>
<feature type="topological domain" description="Cytoplasmic" evidence="5">
    <location>
        <begin position="2009"/>
        <end position="3000"/>
    </location>
</feature>
<feature type="transmembrane region" description="Helical" evidence="5">
    <location>
        <begin position="3001"/>
        <end position="3021"/>
    </location>
</feature>
<feature type="domain" description="Peptidase C18" evidence="17">
    <location>
        <begin position="905"/>
        <end position="1032"/>
    </location>
</feature>
<feature type="domain" description="Peptidase S29" evidence="18">
    <location>
        <begin position="1033"/>
        <end position="1214"/>
    </location>
</feature>
<feature type="domain" description="Helicase ATP-binding" evidence="15">
    <location>
        <begin position="1223"/>
        <end position="1375"/>
    </location>
</feature>
<feature type="domain" description="Helicase C-terminal" evidence="16">
    <location>
        <begin position="1382"/>
        <end position="1544"/>
    </location>
</feature>
<feature type="domain" description="RdRp catalytic" evidence="14">
    <location>
        <begin position="2644"/>
        <end position="2762"/>
    </location>
</feature>
<feature type="region of interest" description="Disordered" evidence="5">
    <location>
        <begin position="2"/>
        <end position="75"/>
    </location>
</feature>
<feature type="region of interest" description="Interaction with DDX3X" evidence="9">
    <location>
        <begin position="2"/>
        <end position="59"/>
    </location>
</feature>
<feature type="region of interest" description="Interaction with EIF2AK2/PKR" evidence="2">
    <location>
        <begin position="2"/>
        <end position="58"/>
    </location>
</feature>
<feature type="region of interest" description="Interaction with STAT1" evidence="2">
    <location>
        <begin position="2"/>
        <end position="23"/>
    </location>
</feature>
<feature type="region of interest" description="Important for endoplasmic reticulum and mitochondrial localization" evidence="2">
    <location>
        <begin position="112"/>
        <end position="152"/>
    </location>
</feature>
<feature type="region of interest" description="Interaction with APOA2" evidence="6">
    <location>
        <begin position="122"/>
        <end position="173"/>
    </location>
</feature>
<feature type="region of interest" description="Important for lipid droplets localization" evidence="5">
    <location>
        <begin position="164"/>
        <end position="167"/>
    </location>
</feature>
<feature type="region of interest" description="Important for fusion" evidence="5">
    <location>
        <begin position="265"/>
        <end position="296"/>
    </location>
</feature>
<feature type="region of interest" description="HVR1" evidence="5">
    <location>
        <begin position="385"/>
        <end position="412"/>
    </location>
</feature>
<feature type="region of interest" description="HVR2" evidence="5">
    <location>
        <begin position="475"/>
        <end position="479"/>
    </location>
</feature>
<feature type="region of interest" description="CD81-binding 1" evidence="3">
    <location>
        <begin position="481"/>
        <end position="494"/>
    </location>
</feature>
<feature type="region of interest" description="CD81-binding 2" evidence="3">
    <location>
        <begin position="545"/>
        <end position="552"/>
    </location>
</feature>
<feature type="region of interest" description="PKR/eIF2-alpha phosphorylation homology domain (PePHD)">
    <location>
        <begin position="666"/>
        <end position="677"/>
    </location>
</feature>
<feature type="region of interest" description="Protease NS2-3" evidence="3">
    <location>
        <begin position="910"/>
        <end position="1212"/>
    </location>
</feature>
<feature type="region of interest" description="Interaction with host SCPS1" evidence="11">
    <location>
        <begin position="935"/>
        <end position="955"/>
    </location>
</feature>
<feature type="region of interest" description="RNA-binding" evidence="3">
    <location>
        <begin position="1492"/>
        <end position="1504"/>
    </location>
</feature>
<feature type="region of interest" description="NS3-binding" evidence="5">
    <location>
        <begin position="1685"/>
        <end position="1696"/>
    </location>
</feature>
<feature type="region of interest" description="Transcriptional activation" evidence="13">
    <location>
        <begin position="2126"/>
        <end position="2338"/>
    </location>
</feature>
<feature type="region of interest" description="FKBP8-binding" evidence="2">
    <location>
        <begin position="2126"/>
        <end position="2214"/>
    </location>
</feature>
<feature type="region of interest" description="Interaction with non-structural protein 4A" evidence="2">
    <location>
        <begin position="2141"/>
        <end position="2145"/>
    </location>
</feature>
<feature type="region of interest" description="Disordered" evidence="19">
    <location>
        <begin position="2193"/>
        <end position="2215"/>
    </location>
</feature>
<feature type="region of interest" description="Interaction with host SKP2" evidence="5">
    <location>
        <begin position="2195"/>
        <end position="2448"/>
    </location>
</feature>
<feature type="region of interest" description="Interaction with EIF2AK2/PKR" evidence="3">
    <location>
        <begin position="2216"/>
        <end position="2281"/>
    </location>
</feature>
<feature type="region of interest" description="ISDR" evidence="2">
    <location>
        <begin position="2216"/>
        <end position="2255"/>
    </location>
</feature>
<feature type="region of interest" description="NS4B-binding" evidence="13">
    <location>
        <begin position="2255"/>
        <end position="2312"/>
    </location>
</feature>
<feature type="region of interest" description="V3">
    <location>
        <begin position="2305"/>
        <end position="2383"/>
    </location>
</feature>
<feature type="region of interest" description="Disordered" evidence="19">
    <location>
        <begin position="2318"/>
        <end position="2338"/>
    </location>
</feature>
<feature type="region of interest" description="Disordered" evidence="19">
    <location>
        <begin position="2356"/>
        <end position="2419"/>
    </location>
</feature>
<feature type="short sequence motif" description="Nuclear localization signal" evidence="11">
    <location>
        <begin position="5"/>
        <end position="13"/>
    </location>
</feature>
<feature type="short sequence motif" description="Nuclear localization signal" evidence="11">
    <location>
        <begin position="38"/>
        <end position="43"/>
    </location>
</feature>
<feature type="short sequence motif" description="Nuclear localization signal" evidence="11">
    <location>
        <begin position="58"/>
        <end position="64"/>
    </location>
</feature>
<feature type="short sequence motif" description="Nuclear localization signal" evidence="11">
    <location>
        <begin position="66"/>
        <end position="71"/>
    </location>
</feature>
<feature type="short sequence motif" description="DECH box" evidence="11">
    <location>
        <begin position="1322"/>
        <end position="1325"/>
    </location>
</feature>
<feature type="short sequence motif" description="SH3-binding" evidence="13">
    <location>
        <begin position="2328"/>
        <end position="2331"/>
    </location>
</feature>
<feature type="short sequence motif" description="Nuclear localization signal" evidence="2">
    <location>
        <begin position="2333"/>
        <end position="2341"/>
    </location>
</feature>
<feature type="compositionally biased region" description="Basic residues" evidence="19">
    <location>
        <begin position="7"/>
        <end position="16"/>
    </location>
</feature>
<feature type="compositionally biased region" description="Basic residues" evidence="19">
    <location>
        <begin position="58"/>
        <end position="68"/>
    </location>
</feature>
<feature type="compositionally biased region" description="Low complexity" evidence="19">
    <location>
        <begin position="2200"/>
        <end position="2215"/>
    </location>
</feature>
<feature type="compositionally biased region" description="Low complexity" evidence="19">
    <location>
        <begin position="2359"/>
        <end position="2381"/>
    </location>
</feature>
<feature type="active site" description="For protease NS2 activity; shared with dimeric partner" evidence="17">
    <location>
        <position position="958"/>
    </location>
</feature>
<feature type="active site" description="For protease NS2 activity; shared with dimeric partner" evidence="17">
    <location>
        <position position="978"/>
    </location>
</feature>
<feature type="active site" description="For protease NS2 activity; shared with dimeric partner" evidence="17">
    <location>
        <position position="999"/>
    </location>
</feature>
<feature type="active site" description="Charge relay system; for serine protease NS3 activity" evidence="18">
    <location>
        <position position="1089"/>
    </location>
</feature>
<feature type="active site" description="Charge relay system; for serine protease NS3 activity" evidence="18">
    <location>
        <position position="1113"/>
    </location>
</feature>
<feature type="active site" description="Charge relay system; for serine protease NS3 activity" evidence="18">
    <location>
        <position position="1171"/>
    </location>
</feature>
<feature type="binding site" evidence="18">
    <location>
        <position position="1129"/>
    </location>
    <ligand>
        <name>Zn(2+)</name>
        <dbReference type="ChEBI" id="CHEBI:29105"/>
        <label>1</label>
        <note>structural; for NS3 protease activity and NS2/3 auto-cleavage activity</note>
    </ligand>
</feature>
<feature type="binding site" evidence="18">
    <location>
        <position position="1131"/>
    </location>
    <ligand>
        <name>Zn(2+)</name>
        <dbReference type="ChEBI" id="CHEBI:29105"/>
        <label>1</label>
        <note>structural; for NS3 protease activity and NS2/3 auto-cleavage activity</note>
    </ligand>
</feature>
<feature type="binding site" evidence="18">
    <location>
        <position position="1177"/>
    </location>
    <ligand>
        <name>Zn(2+)</name>
        <dbReference type="ChEBI" id="CHEBI:29105"/>
        <label>1</label>
        <note>structural; for NS3 protease activity and NS2/3 auto-cleavage activity</note>
    </ligand>
</feature>
<feature type="binding site" evidence="18">
    <location>
        <position position="1181"/>
    </location>
    <ligand>
        <name>Zn(2+)</name>
        <dbReference type="ChEBI" id="CHEBI:29105"/>
        <label>1</label>
        <note>structural; for NS3 protease activity and NS2/3 auto-cleavage activity</note>
    </ligand>
</feature>
<feature type="binding site" evidence="15">
    <location>
        <begin position="1236"/>
        <end position="1243"/>
    </location>
    <ligand>
        <name>ATP</name>
        <dbReference type="ChEBI" id="CHEBI:30616"/>
    </ligand>
</feature>
<feature type="binding site" evidence="12">
    <location>
        <position position="1243"/>
    </location>
    <ligand>
        <name>Mg(2+)</name>
        <dbReference type="ChEBI" id="CHEBI:18420"/>
        <label>1</label>
        <note>catalytic; for NS3 helicase activity</note>
    </ligand>
</feature>
<feature type="binding site" evidence="12">
    <location>
        <position position="2017"/>
    </location>
    <ligand>
        <name>Zn(2+)</name>
        <dbReference type="ChEBI" id="CHEBI:29105"/>
        <label>2</label>
        <note>structural</note>
    </ligand>
</feature>
<feature type="binding site" evidence="12">
    <location>
        <position position="2035"/>
    </location>
    <ligand>
        <name>Zn(2+)</name>
        <dbReference type="ChEBI" id="CHEBI:29105"/>
        <label>2</label>
        <note>structural</note>
    </ligand>
</feature>
<feature type="binding site" evidence="12">
    <location>
        <position position="2037"/>
    </location>
    <ligand>
        <name>Zn(2+)</name>
        <dbReference type="ChEBI" id="CHEBI:29105"/>
        <label>2</label>
        <note>structural</note>
    </ligand>
</feature>
<feature type="binding site" evidence="12">
    <location>
        <position position="2058"/>
    </location>
    <ligand>
        <name>Zn(2+)</name>
        <dbReference type="ChEBI" id="CHEBI:29105"/>
        <label>2</label>
        <note>structural</note>
    </ligand>
</feature>
<feature type="binding site" evidence="3">
    <location>
        <position position="2650"/>
    </location>
    <ligand>
        <name>Mg(2+)</name>
        <dbReference type="ChEBI" id="CHEBI:18420"/>
        <label>2</label>
        <note>catalytic; for RNA-directed RNA polymerase activity</note>
    </ligand>
</feature>
<feature type="binding site" evidence="3">
    <location>
        <position position="2748"/>
    </location>
    <ligand>
        <name>Mg(2+)</name>
        <dbReference type="ChEBI" id="CHEBI:18420"/>
        <label>2</label>
        <note>catalytic; for RNA-directed RNA polymerase activity</note>
    </ligand>
</feature>
<feature type="binding site" evidence="3">
    <location>
        <position position="2749"/>
    </location>
    <ligand>
        <name>Mg(2+)</name>
        <dbReference type="ChEBI" id="CHEBI:18420"/>
        <label>2</label>
        <note>catalytic; for RNA-directed RNA polymerase activity</note>
    </ligand>
</feature>
<feature type="site" description="Cleavage; by host signal peptide peptidase" evidence="2">
    <location>
        <begin position="177"/>
        <end position="178"/>
    </location>
</feature>
<feature type="site" description="Cleavage; by host signal peptidase" evidence="2">
    <location>
        <begin position="191"/>
        <end position="192"/>
    </location>
</feature>
<feature type="site" description="Cleavage; by host signal peptidase" evidence="2">
    <location>
        <begin position="383"/>
        <end position="384"/>
    </location>
</feature>
<feature type="site" description="Cleavage; by host signal peptidase">
    <location>
        <begin position="752"/>
        <end position="753"/>
    </location>
</feature>
<feature type="site" description="Cleavage; by host signal peptidase">
    <location>
        <begin position="815"/>
        <end position="816"/>
    </location>
</feature>
<feature type="site" description="Cleavage; by protease NS2" evidence="17">
    <location>
        <begin position="1032"/>
        <end position="1033"/>
    </location>
</feature>
<feature type="site" description="Cleavage; by serine protease NS3" evidence="5">
    <location>
        <begin position="1663"/>
        <end position="1664"/>
    </location>
</feature>
<feature type="site" description="Cleavage; by serine protease NS3" evidence="5">
    <location>
        <begin position="1717"/>
        <end position="1718"/>
    </location>
</feature>
<feature type="site" description="Cleavage; by serine protease NS3" evidence="5">
    <location>
        <begin position="1978"/>
        <end position="1979"/>
    </location>
</feature>
<feature type="site" description="Cleavage; by serine protease NS3" evidence="5">
    <location>
        <begin position="2430"/>
        <end position="2431"/>
    </location>
</feature>
<feature type="modified residue" description="N-acetylserine; by host" evidence="10">
    <location>
        <position position="2"/>
    </location>
</feature>
<feature type="modified residue" description="Phosphoserine; by host" evidence="7">
    <location>
        <position position="53"/>
    </location>
</feature>
<feature type="modified residue" description="Phosphoserine; by host" evidence="7">
    <location>
        <position position="99"/>
    </location>
</feature>
<feature type="modified residue" description="Phosphoserine; by host" evidence="7">
    <location>
        <position position="116"/>
    </location>
</feature>
<feature type="modified residue" description="Phosphoserine; by host" evidence="12">
    <location>
        <position position="2200"/>
    </location>
</feature>
<feature type="modified residue" description="Phosphoserine; by host" evidence="12">
    <location>
        <position position="2203"/>
    </location>
</feature>
<feature type="modified residue" description="Phosphoserine; by host" evidence="12">
    <location>
        <position position="2207"/>
    </location>
</feature>
<feature type="modified residue" description="Phosphoserine; by host" evidence="12">
    <location>
        <position position="2210"/>
    </location>
</feature>
<feature type="modified residue" description="Phosphoserine; by host" evidence="11">
    <location>
        <position position="2213"/>
    </location>
</feature>
<feature type="modified residue" description="Phosphoserine; by host" evidence="11">
    <location>
        <position position="2216"/>
    </location>
</feature>
<feature type="modified residue" description="Phosphoserine; by host" evidence="2">
    <location>
        <position position="2459"/>
    </location>
</feature>
<feature type="modified residue" description="Phosphoserine; by host" evidence="2">
    <location>
        <position position="2472"/>
    </location>
</feature>
<feature type="lipid moiety-binding region" description="S-palmitoyl cysteine; by host" evidence="5">
    <location>
        <position position="928"/>
    </location>
</feature>
<feature type="lipid moiety-binding region" description="S-palmitoyl cysteine; by host" evidence="5">
    <location>
        <position position="1978"/>
    </location>
</feature>
<feature type="glycosylation site" description="N-linked (GlcNAc...) asparagine; by host" evidence="5">
    <location>
        <position position="196"/>
    </location>
</feature>
<feature type="glycosylation site" description="N-linked (GlcNAc...) asparagine; by host" evidence="5">
    <location>
        <position position="209"/>
    </location>
</feature>
<feature type="glycosylation site" description="N-linked (GlcNAc...) asparagine; by host" evidence="5">
    <location>
        <position position="234"/>
    </location>
</feature>
<feature type="glycosylation site" description="N-linked (GlcNAc...) asparagine; by host" evidence="5">
    <location>
        <position position="305"/>
    </location>
</feature>
<feature type="glycosylation site" description="N-linked (GlcNAc...) (high mannose) asparagine; by host" evidence="5">
    <location>
        <position position="417"/>
    </location>
</feature>
<feature type="glycosylation site" description="N-linked (GlcNAc...) (high mannose) asparagine; by host" evidence="5">
    <location>
        <position position="423"/>
    </location>
</feature>
<feature type="glycosylation site" description="N-linked (GlcNAc...) (high mannose) asparagine; by host" evidence="5">
    <location>
        <position position="430"/>
    </location>
</feature>
<feature type="glycosylation site" description="N-linked (GlcNAc...) asparagine; by host" evidence="13">
    <location>
        <position position="448"/>
    </location>
</feature>
<feature type="glycosylation site" description="N-linked (GlcNAc...) asparagine; by host" evidence="13">
    <location>
        <position position="476"/>
    </location>
</feature>
<feature type="glycosylation site" description="N-linked (GlcNAc...) asparagine; by host" evidence="13">
    <location>
        <position position="533"/>
    </location>
</feature>
<feature type="glycosylation site" description="N-linked (GlcNAc...) asparagine; by host" evidence="13">
    <location>
        <position position="557"/>
    </location>
</feature>
<feature type="glycosylation site" description="N-linked (GlcNAc...) (high mannose) asparagine; by host" evidence="5">
    <location>
        <position position="629"/>
    </location>
</feature>
<feature type="glycosylation site" description="N-linked (GlcNAc...) (high mannose) asparagine; by host" evidence="5">
    <location>
        <position position="651"/>
    </location>
</feature>
<feature type="disulfide bond" evidence="5">
    <location>
        <begin position="429"/>
        <end position="553"/>
    </location>
</feature>
<feature type="disulfide bond" evidence="5">
    <location>
        <begin position="452"/>
        <end position="459"/>
    </location>
</feature>
<feature type="disulfide bond" evidence="5">
    <location>
        <begin position="487"/>
        <end position="495"/>
    </location>
</feature>
<feature type="disulfide bond" evidence="5">
    <location>
        <begin position="504"/>
        <end position="509"/>
    </location>
</feature>
<feature type="disulfide bond" evidence="5">
    <location>
        <begin position="565"/>
        <end position="570"/>
    </location>
</feature>
<feature type="disulfide bond" evidence="5">
    <location>
        <begin position="587"/>
        <end position="591"/>
    </location>
</feature>
<feature type="disulfide bond" evidence="5">
    <location>
        <begin position="603"/>
        <end position="626"/>
    </location>
</feature>
<feature type="disulfide bond" evidence="5">
    <location>
        <begin position="613"/>
        <end position="650"/>
    </location>
</feature>
<feature type="disulfide bond" evidence="5">
    <location>
        <begin position="658"/>
        <end position="683"/>
    </location>
</feature>
<feature type="cross-link" description="Glycyl lysine isopeptide (Lys-Gly) (interchain with G-Cter in ubiquitin)" evidence="5">
    <location>
        <position position="2356"/>
    </location>
</feature>
<keyword id="KW-0007">Acetylation</keyword>
<keyword id="KW-1072">Activation of host autophagy by virus</keyword>
<keyword id="KW-0053">Apoptosis</keyword>
<keyword id="KW-0067">ATP-binding</keyword>
<keyword id="KW-0167">Capsid protein</keyword>
<keyword id="KW-1165">Clathrin-mediated endocytosis of virus by host</keyword>
<keyword id="KW-1015">Disulfide bond</keyword>
<keyword id="KW-1170">Fusion of virus membrane with host endosomal membrane</keyword>
<keyword id="KW-1168">Fusion of virus membrane with host membrane</keyword>
<keyword id="KW-1078">G1/S host cell cycle checkpoint dysregulation by virus</keyword>
<keyword id="KW-0325">Glycoprotein</keyword>
<keyword id="KW-0347">Helicase</keyword>
<keyword id="KW-1032">Host cell membrane</keyword>
<keyword id="KW-1035">Host cytoplasm</keyword>
<keyword id="KW-1038">Host endoplasmic reticulum</keyword>
<keyword id="KW-1041">Host lipid droplet</keyword>
<keyword id="KW-1043">Host membrane</keyword>
<keyword id="KW-1045">Host mitochondrion</keyword>
<keyword id="KW-1048">Host nucleus</keyword>
<keyword id="KW-0945">Host-virus interaction</keyword>
<keyword id="KW-0378">Hydrolase</keyword>
<keyword id="KW-1090">Inhibition of host innate immune response by virus</keyword>
<keyword id="KW-1114">Inhibition of host interferon signaling pathway by virus</keyword>
<keyword id="KW-1097">Inhibition of host MAVS by virus</keyword>
<keyword id="KW-1113">Inhibition of host RLR pathway by virus</keyword>
<keyword id="KW-1105">Inhibition of host STAT1 by virus</keyword>
<keyword id="KW-1110">Inhibition of host TRAFs by virus</keyword>
<keyword id="KW-0922">Interferon antiviral system evasion</keyword>
<keyword id="KW-0407">Ion channel</keyword>
<keyword id="KW-0406">Ion transport</keyword>
<keyword id="KW-1017">Isopeptide bond</keyword>
<keyword id="KW-0449">Lipoprotein</keyword>
<keyword id="KW-0460">Magnesium</keyword>
<keyword id="KW-0472">Membrane</keyword>
<keyword id="KW-0479">Metal-binding</keyword>
<keyword id="KW-1121">Modulation of host cell cycle by virus</keyword>
<keyword id="KW-0511">Multifunctional enzyme</keyword>
<keyword id="KW-0547">Nucleotide-binding</keyword>
<keyword id="KW-0548">Nucleotidyltransferase</keyword>
<keyword id="KW-0553">Oncogene</keyword>
<keyword id="KW-0564">Palmitate</keyword>
<keyword id="KW-0597">Phosphoprotein</keyword>
<keyword id="KW-0645">Protease</keyword>
<keyword id="KW-0687">Ribonucleoprotein</keyword>
<keyword id="KW-0694">RNA-binding</keyword>
<keyword id="KW-0696">RNA-directed RNA polymerase</keyword>
<keyword id="KW-0720">Serine protease</keyword>
<keyword id="KW-0729">SH3-binding</keyword>
<keyword id="KW-0788">Thiol protease</keyword>
<keyword id="KW-0804">Transcription</keyword>
<keyword id="KW-0805">Transcription regulation</keyword>
<keyword id="KW-0808">Transferase</keyword>
<keyword id="KW-0812">Transmembrane</keyword>
<keyword id="KW-1133">Transmembrane helix</keyword>
<keyword id="KW-0813">Transport</keyword>
<keyword id="KW-0832">Ubl conjugation</keyword>
<keyword id="KW-1161">Viral attachment to host cell</keyword>
<keyword id="KW-0261">Viral envelope protein</keyword>
<keyword id="KW-0899">Viral immunoevasion</keyword>
<keyword id="KW-1182">Viral ion channel</keyword>
<keyword id="KW-0543">Viral nucleoprotein</keyword>
<keyword id="KW-1162">Viral penetration into host cytoplasm</keyword>
<keyword id="KW-0693">Viral RNA replication</keyword>
<keyword id="KW-0946">Virion</keyword>
<keyword id="KW-1164">Virus endocytosis by host</keyword>
<keyword id="KW-1160">Virus entry into host cell</keyword>
<keyword id="KW-0862">Zinc</keyword>
<sequence length="3021" mass="328390">MSTLPKPQRKTKRNTIRRPQDVKFPGGGVIYVGVYVLPRRGPRLGVRATRKTSERSQPRGRRKPIPKARRSEGRSWAQPGYPWPLYGNEGCGWAGWLLSPRGSRPNWAPNDPRRRSRNLGKVIDTLTCGFADLMGYIPLVGAPLGGAARALAHGVRALEDGINFATGNLPGCSFSIFLLALFSCLIHPAASLEWRNTSGLYVLTNDCSNSSIVYEADDVILHTPGCIPCVQDGNTSTCWTPVTPTVAVRYVGATTASIRSHVDLLVGAGTMCSALYVGDMCGPVFLVGQAFTFRPRRHRTVQTCNCSLYPGHLSGQRMAWDMMMNWSPAVGMVVAHILRLPQTLFDVVAGAHWGIIAGLAYYSMQGNWAKVAIIMVMFSGVDASTHVTAGQAARNAYGITSLFSVGAKQNLQLINTNGSWHINRTALNCNESINTGFIAGLFYYHKFNSTGCPQRLSSCKPITFFKQGWGPLTDANITGPSDDKPYCWHYAPRPCGIVPALNVCGPVYCFTPSPVVVGTTDAKGAPTYTWGANKTDVFLLESLRPPSGRWFGCTWMNSTGFVKTCGAPPCNIYGDGRDAQNESDLFCPTDCFRKHPEATYSRCGAGPWLTPRCLVDYPYRLWHYPCTVNFTLFKVRMFVGGFEHRFTAACNWTRGERCDIEDRDRSEQHPLLHSTTELAILPCSFTPMPALSTGLIHLHQNIVDVQYLYGIGSGMVGWALKWEFVILIFLLLADARVCVALWLILTISQAEAALENLVTLNAVAAAGTHGIGWYLVAFCAAWYVRGKLVPLVTYSLTGLWSLALLVLLLPQRAYAWSGEDSATLGAGILVLFGFFTLSPWYKHWIARLIWWNQYTICRCESALHVWVPPLLARGGRDGVILLTSLLYPSLIFDITKLLIAALGPLYLIQATITATPYFVRAHVLVRLCMLVRSVMGGKYFQMIILSLADGSNTYLYDHLAPMQHWAAAGLKDLAVATEPVIFSPMEIKVITWGADTAACGDILCGLPVSARLGREVLLGPADDYREMGWRLLAPITAYAQQTRGLLGTIVTSLTGRDKNVVAGEVQVLSTATQTFLGTTVGGVMWTVYHGAGSRTLAGVKHPALQMYTNVDQDLVGWPAPPGAKSLEPCTCGSADLYLVTRDADVIPARRRGDSTASLLSPRPLARLKGSSGGPVMCPSGHVAGIFRAAVCTRGVAKALQFIPVETLSTQARSPSFSDNSTPPAVPQSYQVGYLHAPTGSGKSTKVPAAYVAQGYNVLVLNPSVAATLGFGSFMSRAYGIDPNIRTGNRTVTTGAKLTYSTYGKFLAGGGCSGGAYDVIICDDCHAQDATSILGIGTVLDQAETAGVRLTVLATATPPGSITVPHSNIEEVALGSEGEIPFYGKAIPIACIKGGRHLIFCHSKKKCDKMASKLRGMGLNAVAYYRGLDVSVIPTTGDVVVCATDALMTGFTGDFDSVIDCNVAVEQYVDFSLDPTFSIETCTAPQDAVSRSQRRGRTGRGRLGTYRYVTPGERPSGMFDSVVLCECYDAGCSWYDLQPAETTVRLRAYLSTPGLPVCQDHLDLWESVFTGLTHIDAHFLSQTKQAGLNFSYLTAYQATVCARAQAPPPSWDETWKCLVRLKPTLHGPTPLLYRLGPVQNEICLTHPITKYVMACMSADLEVTTSTWVLLGGVLAAVAAYCLSVGCVVIVGHIELGGKPALVPDKEVLYQQYDEMEECSQARPYIEQAQVIAHQFKEKVLGLLQRATQQQAVIEPIVVSNWQKLEVLWHKHMWNFVSGIQYLAGLSTLPGNPAVASLMAFTASVTSPLTTNQTMFFNILGGWVATHLAGPQASSAFVVSGLAGAAIGGIGLGRVLLDILAGYGAGVSGALVAFKIMGGEPPTTEDMVNLLPAILSPGALVVGVICAAILRRHVGPGEGPVQWMNRLIAFASRGNHVSPAHYVPESDAAARVTALLSSLTVTSLLRRLHQWINEDYPSPCSGDWLRIIWDWVCSVVSDFKTWLSAKIMPALPGLPFISCQKGYKGVWRGDGVMSTRCPCGASIAGHVKNGSMRLAGPRTCANMCHGTFPINEYTTGPSTPCPPPNYTRALWRVAANSYVEVRRVGDFHYITGATEDGLKCPCQVPATEFFTEVDGVRIHRYAPPCRPLLRDEITFMVGLNSYAIGSQLPCEPEPDVSVLTSMLRDPSHITAETAARRLARGSPPSEASSSASQLSAPSLKATCQTHRPHPDAELVDANLLWRQEMGSNITRVESETKVVILDSFEPLRAETDDAELSAAAECFKKPPKYPPALPIWARPDYNPPLLDRWKSPDYVPPTVHGCALPPKGAPPVPPPRRKRTIQLDGSNVSAALAALAEKSFPSSKPQEENSSSSGVDTQSSTASKVLPSPGEESDSESCSSMPPLEGEPGDPDLSCDSWSTVSDSEEQSVVCCSMSYSWTGALITPCSAEEEKLPISPLSNSLLRHHNLVYSTSSRSASQRQKKVTFDRLQVLDDHYKTALQEVKERASRVKARMLSIEEACALVPPHSARSKFGYSAKDVRSLSSKAINQIRSVWEDLLEDTTTPIPTTIMAKNEVFCVDPAKGGRKAARLIVYPDLGVRVCEKRALYDVIQRLSIETMGSAYGFQYSPRQRVERLLKMWTSKKTPLGFSYDTRCFDSTVTGQDIRVEEAVYQCCNLEPEPGQAISSLTERLYCGGPMNNSKGAQCGYLRCRASGVLPTSFGNTITCYIKATAAARAAGLRNPDFLVCGDDLVVVAESDGVDEDRATLRAFTEAMTRYSAPPGDAPQPTYDLELITSCSSNVSVARDDKGKRYYYLTRDATTPLARAAWETARHTPVNSWLGSIIMYAPTIWVRMVMMTHFFSILQSQEILDRPLDFEMYGATYSVTPLDLPAIIERLHGLSAFSVHSYSPVELNRVAGTLRKLGCPPLRAWRHRARAVRAKLIAQGGRAKICGLYLFNWAVRTKTKLTPLPAAGQLDLSSWFTVGVGGNDIYHSVSRARTRYLLLCLLLLTVGVGIFLLPAR</sequence>
<reference key="1">
    <citation type="journal article" date="1994" name="J. Gen. Virol.">
        <title>Full-length sequence of the genome of hepatitis C virus type 3a: comparative study with different genotypes.</title>
        <authorList>
            <person name="Yamada N."/>
            <person name="Manihara K."/>
            <person name="Mizokami M."/>
            <person name="Ohba K."/>
            <person name="Takada A."/>
            <person name="Tsutsumi M."/>
            <person name="Date T."/>
        </authorList>
    </citation>
    <scope>NUCLEOTIDE SEQUENCE [GENOMIC RNA]</scope>
</reference>
<reference key="2">
    <citation type="journal article" date="2000" name="J. Viral Hepat.">
        <title>Properties of the hepatitis C virus core protein: a structural protein that modulates cellular processes.</title>
        <authorList>
            <person name="McLauchlan J."/>
        </authorList>
    </citation>
    <scope>REVIEW</scope>
</reference>
<reference key="3">
    <citation type="journal article" date="2004" name="Hepatology">
        <title>Structural biology of hepatitis C virus.</title>
        <authorList>
            <person name="Penin F."/>
            <person name="Dubuisson J."/>
            <person name="Rey F.A."/>
            <person name="Moradpour D."/>
            <person name="Pawlotsky J.-M."/>
        </authorList>
    </citation>
    <scope>REVIEW</scope>
</reference>
<dbReference type="EC" id="3.4.22.-" evidence="3"/>
<dbReference type="EC" id="3.4.21.98" evidence="5"/>
<dbReference type="EC" id="3.6.1.15" evidence="5"/>
<dbReference type="EC" id="3.6.4.13" evidence="5"/>
<dbReference type="EC" id="2.7.7.48" evidence="5"/>
<dbReference type="EMBL" id="D28917">
    <property type="protein sequence ID" value="BAA06044.1"/>
    <property type="molecule type" value="Genomic_RNA"/>
</dbReference>
<dbReference type="SMR" id="Q81495"/>
<dbReference type="BindingDB" id="Q81495"/>
<dbReference type="DrugCentral" id="Q81495"/>
<dbReference type="MEROPS" id="C18.001"/>
<dbReference type="euHCVdb" id="D28917"/>
<dbReference type="Proteomes" id="UP000008099">
    <property type="component" value="Genome"/>
</dbReference>
<dbReference type="GO" id="GO:0044167">
    <property type="term" value="C:host cell endoplasmic reticulum membrane"/>
    <property type="evidence" value="ECO:0007669"/>
    <property type="project" value="UniProtKB-SubCell"/>
</dbReference>
<dbReference type="GO" id="GO:0044186">
    <property type="term" value="C:host cell lipid droplet"/>
    <property type="evidence" value="ECO:0007669"/>
    <property type="project" value="UniProtKB-SubCell"/>
</dbReference>
<dbReference type="GO" id="GO:0044191">
    <property type="term" value="C:host cell mitochondrial membrane"/>
    <property type="evidence" value="ECO:0007669"/>
    <property type="project" value="UniProtKB-SubCell"/>
</dbReference>
<dbReference type="GO" id="GO:0042025">
    <property type="term" value="C:host cell nucleus"/>
    <property type="evidence" value="ECO:0007669"/>
    <property type="project" value="UniProtKB-SubCell"/>
</dbReference>
<dbReference type="GO" id="GO:0044220">
    <property type="term" value="C:host cell perinuclear region of cytoplasm"/>
    <property type="evidence" value="ECO:0007669"/>
    <property type="project" value="UniProtKB-SubCell"/>
</dbReference>
<dbReference type="GO" id="GO:0020002">
    <property type="term" value="C:host cell plasma membrane"/>
    <property type="evidence" value="ECO:0007669"/>
    <property type="project" value="UniProtKB-SubCell"/>
</dbReference>
<dbReference type="GO" id="GO:0016020">
    <property type="term" value="C:membrane"/>
    <property type="evidence" value="ECO:0007669"/>
    <property type="project" value="UniProtKB-KW"/>
</dbReference>
<dbReference type="GO" id="GO:1990904">
    <property type="term" value="C:ribonucleoprotein complex"/>
    <property type="evidence" value="ECO:0007669"/>
    <property type="project" value="UniProtKB-KW"/>
</dbReference>
<dbReference type="GO" id="GO:0019031">
    <property type="term" value="C:viral envelope"/>
    <property type="evidence" value="ECO:0007669"/>
    <property type="project" value="UniProtKB-KW"/>
</dbReference>
<dbReference type="GO" id="GO:0019013">
    <property type="term" value="C:viral nucleocapsid"/>
    <property type="evidence" value="ECO:0007669"/>
    <property type="project" value="UniProtKB-KW"/>
</dbReference>
<dbReference type="GO" id="GO:0055036">
    <property type="term" value="C:virion membrane"/>
    <property type="evidence" value="ECO:0007669"/>
    <property type="project" value="UniProtKB-SubCell"/>
</dbReference>
<dbReference type="GO" id="GO:0005524">
    <property type="term" value="F:ATP binding"/>
    <property type="evidence" value="ECO:0007669"/>
    <property type="project" value="UniProtKB-KW"/>
</dbReference>
<dbReference type="GO" id="GO:0016887">
    <property type="term" value="F:ATP hydrolysis activity"/>
    <property type="evidence" value="ECO:0007669"/>
    <property type="project" value="RHEA"/>
</dbReference>
<dbReference type="GO" id="GO:0015267">
    <property type="term" value="F:channel activity"/>
    <property type="evidence" value="ECO:0007669"/>
    <property type="project" value="UniProtKB-KW"/>
</dbReference>
<dbReference type="GO" id="GO:0004197">
    <property type="term" value="F:cysteine-type endopeptidase activity"/>
    <property type="evidence" value="ECO:0007669"/>
    <property type="project" value="InterPro"/>
</dbReference>
<dbReference type="GO" id="GO:0003723">
    <property type="term" value="F:RNA binding"/>
    <property type="evidence" value="ECO:0007669"/>
    <property type="project" value="UniProtKB-KW"/>
</dbReference>
<dbReference type="GO" id="GO:0003724">
    <property type="term" value="F:RNA helicase activity"/>
    <property type="evidence" value="ECO:0007669"/>
    <property type="project" value="UniProtKB-EC"/>
</dbReference>
<dbReference type="GO" id="GO:0003968">
    <property type="term" value="F:RNA-directed RNA polymerase activity"/>
    <property type="evidence" value="ECO:0007669"/>
    <property type="project" value="UniProtKB-KW"/>
</dbReference>
<dbReference type="GO" id="GO:0004252">
    <property type="term" value="F:serine-type endopeptidase activity"/>
    <property type="evidence" value="ECO:0007669"/>
    <property type="project" value="InterPro"/>
</dbReference>
<dbReference type="GO" id="GO:0017124">
    <property type="term" value="F:SH3 domain binding"/>
    <property type="evidence" value="ECO:0007669"/>
    <property type="project" value="UniProtKB-KW"/>
</dbReference>
<dbReference type="GO" id="GO:0005198">
    <property type="term" value="F:structural molecule activity"/>
    <property type="evidence" value="ECO:0007669"/>
    <property type="project" value="InterPro"/>
</dbReference>
<dbReference type="GO" id="GO:0008270">
    <property type="term" value="F:zinc ion binding"/>
    <property type="evidence" value="ECO:0007669"/>
    <property type="project" value="InterPro"/>
</dbReference>
<dbReference type="GO" id="GO:0075512">
    <property type="term" value="P:clathrin-dependent endocytosis of virus by host cell"/>
    <property type="evidence" value="ECO:0007669"/>
    <property type="project" value="UniProtKB-KW"/>
</dbReference>
<dbReference type="GO" id="GO:0039654">
    <property type="term" value="P:fusion of virus membrane with host endosome membrane"/>
    <property type="evidence" value="ECO:0007669"/>
    <property type="project" value="UniProtKB-KW"/>
</dbReference>
<dbReference type="GO" id="GO:0034220">
    <property type="term" value="P:monoatomic ion transmembrane transport"/>
    <property type="evidence" value="ECO:0007669"/>
    <property type="project" value="UniProtKB-KW"/>
</dbReference>
<dbReference type="GO" id="GO:0006508">
    <property type="term" value="P:proteolysis"/>
    <property type="evidence" value="ECO:0007669"/>
    <property type="project" value="UniProtKB-KW"/>
</dbReference>
<dbReference type="GO" id="GO:0039520">
    <property type="term" value="P:symbiont-mediated activation of host autophagy"/>
    <property type="evidence" value="ECO:0007669"/>
    <property type="project" value="UniProtKB-KW"/>
</dbReference>
<dbReference type="GO" id="GO:0039645">
    <property type="term" value="P:symbiont-mediated perturbation of host cell cycle G1/S transition checkpoint"/>
    <property type="evidence" value="ECO:0007669"/>
    <property type="project" value="UniProtKB-KW"/>
</dbReference>
<dbReference type="GO" id="GO:0039545">
    <property type="term" value="P:symbiont-mediated suppression of host cytoplasmic pattern recognition receptor signaling pathway via inhibition of MAVS activity"/>
    <property type="evidence" value="ECO:0007669"/>
    <property type="project" value="UniProtKB-KW"/>
</dbReference>
<dbReference type="GO" id="GO:0039563">
    <property type="term" value="P:symbiont-mediated suppression of host JAK-STAT cascade via inhibition of STAT1 activity"/>
    <property type="evidence" value="ECO:0007669"/>
    <property type="project" value="UniProtKB-KW"/>
</dbReference>
<dbReference type="GO" id="GO:0039527">
    <property type="term" value="P:symbiont-mediated suppression of host TRAF-mediated signal transduction"/>
    <property type="evidence" value="ECO:0007669"/>
    <property type="project" value="UniProtKB-KW"/>
</dbReference>
<dbReference type="GO" id="GO:0039502">
    <property type="term" value="P:symbiont-mediated suppression of host type I interferon-mediated signaling pathway"/>
    <property type="evidence" value="ECO:0007669"/>
    <property type="project" value="UniProtKB-KW"/>
</dbReference>
<dbReference type="GO" id="GO:0019087">
    <property type="term" value="P:symbiont-mediated transformation of host cell"/>
    <property type="evidence" value="ECO:0007669"/>
    <property type="project" value="InterPro"/>
</dbReference>
<dbReference type="GO" id="GO:0039694">
    <property type="term" value="P:viral RNA genome replication"/>
    <property type="evidence" value="ECO:0007669"/>
    <property type="project" value="InterPro"/>
</dbReference>
<dbReference type="GO" id="GO:0019062">
    <property type="term" value="P:virion attachment to host cell"/>
    <property type="evidence" value="ECO:0007669"/>
    <property type="project" value="UniProtKB-KW"/>
</dbReference>
<dbReference type="CDD" id="cd20903">
    <property type="entry name" value="HCV_p7"/>
    <property type="match status" value="1"/>
</dbReference>
<dbReference type="CDD" id="cd23202">
    <property type="entry name" value="Hepacivirus_RdRp"/>
    <property type="match status" value="1"/>
</dbReference>
<dbReference type="FunFam" id="3.30.160.890:FF:000001">
    <property type="entry name" value="Genome polyprotein"/>
    <property type="match status" value="1"/>
</dbReference>
<dbReference type="FunFam" id="3.30.70.270:FF:000015">
    <property type="entry name" value="Genome polyprotein"/>
    <property type="match status" value="1"/>
</dbReference>
<dbReference type="FunFam" id="3.40.50.300:FF:000557">
    <property type="entry name" value="Genome polyprotein"/>
    <property type="match status" value="1"/>
</dbReference>
<dbReference type="FunFam" id="3.40.50.300:FF:000717">
    <property type="entry name" value="Genome polyprotein"/>
    <property type="match status" value="1"/>
</dbReference>
<dbReference type="Gene3D" id="2.40.10.120">
    <property type="match status" value="1"/>
</dbReference>
<dbReference type="Gene3D" id="3.30.70.270">
    <property type="match status" value="2"/>
</dbReference>
<dbReference type="Gene3D" id="6.10.250.1610">
    <property type="match status" value="1"/>
</dbReference>
<dbReference type="Gene3D" id="6.10.250.1750">
    <property type="match status" value="1"/>
</dbReference>
<dbReference type="Gene3D" id="6.10.250.2920">
    <property type="match status" value="1"/>
</dbReference>
<dbReference type="Gene3D" id="2.20.25.210">
    <property type="entry name" value="Hepatitis C NS5A, domain 1B"/>
    <property type="match status" value="1"/>
</dbReference>
<dbReference type="Gene3D" id="4.10.710.10">
    <property type="entry name" value="Hepatitis C Virus Capsid Protein, Chain A"/>
    <property type="match status" value="1"/>
</dbReference>
<dbReference type="Gene3D" id="3.30.160.890">
    <property type="entry name" value="Hepatitis C virus envelope glycoprotein E1, chain C"/>
    <property type="match status" value="1"/>
</dbReference>
<dbReference type="Gene3D" id="2.30.30.710">
    <property type="entry name" value="Hepatitis C virus non-structural protein NS2, C-terminal domain"/>
    <property type="match status" value="1"/>
</dbReference>
<dbReference type="Gene3D" id="1.20.1280.150">
    <property type="entry name" value="Hepatitis C virus non-structural protein NS2, N-terminal domain"/>
    <property type="match status" value="1"/>
</dbReference>
<dbReference type="Gene3D" id="2.20.25.220">
    <property type="entry name" value="Hepatitis C virus NS5A, 1B domain"/>
    <property type="match status" value="1"/>
</dbReference>
<dbReference type="Gene3D" id="3.40.50.300">
    <property type="entry name" value="P-loop containing nucleotide triphosphate hydrolases"/>
    <property type="match status" value="2"/>
</dbReference>
<dbReference type="Gene3D" id="1.10.820.10">
    <property type="entry name" value="RNA Helicase Chain A , domain 3"/>
    <property type="match status" value="1"/>
</dbReference>
<dbReference type="Gene3D" id="2.40.10.10">
    <property type="entry name" value="Trypsin-like serine proteases"/>
    <property type="match status" value="1"/>
</dbReference>
<dbReference type="InterPro" id="IPR043502">
    <property type="entry name" value="DNA/RNA_pol_sf"/>
</dbReference>
<dbReference type="InterPro" id="IPR011492">
    <property type="entry name" value="Flavi_DEAD"/>
</dbReference>
<dbReference type="InterPro" id="IPR002521">
    <property type="entry name" value="HCV_Core_C"/>
</dbReference>
<dbReference type="InterPro" id="IPR044896">
    <property type="entry name" value="HCV_core_chain_A"/>
</dbReference>
<dbReference type="InterPro" id="IPR002522">
    <property type="entry name" value="HCV_core_N"/>
</dbReference>
<dbReference type="InterPro" id="IPR002519">
    <property type="entry name" value="HCV_Env"/>
</dbReference>
<dbReference type="InterPro" id="IPR002531">
    <property type="entry name" value="HCV_NS1"/>
</dbReference>
<dbReference type="InterPro" id="IPR002518">
    <property type="entry name" value="HCV_NS2"/>
</dbReference>
<dbReference type="InterPro" id="IPR042205">
    <property type="entry name" value="HCV_NS2_C"/>
</dbReference>
<dbReference type="InterPro" id="IPR042209">
    <property type="entry name" value="HCV_NS2_N"/>
</dbReference>
<dbReference type="InterPro" id="IPR000745">
    <property type="entry name" value="HCV_NS4a"/>
</dbReference>
<dbReference type="InterPro" id="IPR001490">
    <property type="entry name" value="HCV_NS4b"/>
</dbReference>
<dbReference type="InterPro" id="IPR002868">
    <property type="entry name" value="HCV_NS5a"/>
</dbReference>
<dbReference type="InterPro" id="IPR013192">
    <property type="entry name" value="HCV_NS5A_1a"/>
</dbReference>
<dbReference type="InterPro" id="IPR013193">
    <property type="entry name" value="HCV_NS5a_1B_dom"/>
</dbReference>
<dbReference type="InterPro" id="IPR038568">
    <property type="entry name" value="HCV_NS5A_1B_sf"/>
</dbReference>
<dbReference type="InterPro" id="IPR024350">
    <property type="entry name" value="HCV_NS5a_C"/>
</dbReference>
<dbReference type="InterPro" id="IPR049913">
    <property type="entry name" value="HCV_p7"/>
</dbReference>
<dbReference type="InterPro" id="IPR014001">
    <property type="entry name" value="Helicase_ATP-bd"/>
</dbReference>
<dbReference type="InterPro" id="IPR001650">
    <property type="entry name" value="Helicase_C-like"/>
</dbReference>
<dbReference type="InterPro" id="IPR004109">
    <property type="entry name" value="HepC_NS3_protease"/>
</dbReference>
<dbReference type="InterPro" id="IPR054175">
    <property type="entry name" value="NS3_helicase_C"/>
</dbReference>
<dbReference type="InterPro" id="IPR038170">
    <property type="entry name" value="NS5A_1a_sf"/>
</dbReference>
<dbReference type="InterPro" id="IPR027417">
    <property type="entry name" value="P-loop_NTPase"/>
</dbReference>
<dbReference type="InterPro" id="IPR009003">
    <property type="entry name" value="Peptidase_S1_PA"/>
</dbReference>
<dbReference type="InterPro" id="IPR043504">
    <property type="entry name" value="Peptidase_S1_PA_chymotrypsin"/>
</dbReference>
<dbReference type="InterPro" id="IPR043128">
    <property type="entry name" value="Rev_trsase/Diguanyl_cyclase"/>
</dbReference>
<dbReference type="InterPro" id="IPR007094">
    <property type="entry name" value="RNA-dir_pol_PSvirus"/>
</dbReference>
<dbReference type="InterPro" id="IPR002166">
    <property type="entry name" value="RNA_pol_HCV"/>
</dbReference>
<dbReference type="Pfam" id="PF07652">
    <property type="entry name" value="Flavi_DEAD"/>
    <property type="match status" value="1"/>
</dbReference>
<dbReference type="Pfam" id="PF01543">
    <property type="entry name" value="HCV_capsid"/>
    <property type="match status" value="1"/>
</dbReference>
<dbReference type="Pfam" id="PF01542">
    <property type="entry name" value="HCV_core"/>
    <property type="match status" value="1"/>
</dbReference>
<dbReference type="Pfam" id="PF01539">
    <property type="entry name" value="HCV_env"/>
    <property type="match status" value="1"/>
</dbReference>
<dbReference type="Pfam" id="PF01560">
    <property type="entry name" value="HCV_NS1"/>
    <property type="match status" value="1"/>
</dbReference>
<dbReference type="Pfam" id="PF01538">
    <property type="entry name" value="HCV_NS2"/>
    <property type="match status" value="1"/>
</dbReference>
<dbReference type="Pfam" id="PF01006">
    <property type="entry name" value="HCV_NS4a"/>
    <property type="match status" value="1"/>
</dbReference>
<dbReference type="Pfam" id="PF01001">
    <property type="entry name" value="HCV_NS4b"/>
    <property type="match status" value="1"/>
</dbReference>
<dbReference type="Pfam" id="PF01506">
    <property type="entry name" value="HCV_NS5a"/>
    <property type="match status" value="1"/>
</dbReference>
<dbReference type="Pfam" id="PF08300">
    <property type="entry name" value="HCV_NS5a_1a"/>
    <property type="match status" value="1"/>
</dbReference>
<dbReference type="Pfam" id="PF08301">
    <property type="entry name" value="HCV_NS5a_1b"/>
    <property type="match status" value="1"/>
</dbReference>
<dbReference type="Pfam" id="PF12941">
    <property type="entry name" value="HCV_NS5a_C"/>
    <property type="match status" value="1"/>
</dbReference>
<dbReference type="Pfam" id="PF22027">
    <property type="entry name" value="NS3_helicase_C"/>
    <property type="match status" value="1"/>
</dbReference>
<dbReference type="Pfam" id="PF02907">
    <property type="entry name" value="Peptidase_S29"/>
    <property type="match status" value="1"/>
</dbReference>
<dbReference type="Pfam" id="PF00998">
    <property type="entry name" value="RdRP_3"/>
    <property type="match status" value="1"/>
</dbReference>
<dbReference type="SMART" id="SM00487">
    <property type="entry name" value="DEXDc"/>
    <property type="match status" value="1"/>
</dbReference>
<dbReference type="SUPFAM" id="SSF56672">
    <property type="entry name" value="DNA/RNA polymerases"/>
    <property type="match status" value="1"/>
</dbReference>
<dbReference type="SUPFAM" id="SSF52540">
    <property type="entry name" value="P-loop containing nucleoside triphosphate hydrolases"/>
    <property type="match status" value="2"/>
</dbReference>
<dbReference type="SUPFAM" id="SSF50494">
    <property type="entry name" value="Trypsin-like serine proteases"/>
    <property type="match status" value="1"/>
</dbReference>
<dbReference type="PROSITE" id="PS51693">
    <property type="entry name" value="HCV_NS2_PRO"/>
    <property type="match status" value="1"/>
</dbReference>
<dbReference type="PROSITE" id="PS51192">
    <property type="entry name" value="HELICASE_ATP_BIND_1"/>
    <property type="match status" value="1"/>
</dbReference>
<dbReference type="PROSITE" id="PS51194">
    <property type="entry name" value="HELICASE_CTER"/>
    <property type="match status" value="1"/>
</dbReference>
<dbReference type="PROSITE" id="PS51822">
    <property type="entry name" value="HV_PV_NS3_PRO"/>
    <property type="match status" value="1"/>
</dbReference>
<dbReference type="PROSITE" id="PS50507">
    <property type="entry name" value="RDRP_SSRNA_POS"/>
    <property type="match status" value="1"/>
</dbReference>
<proteinExistence type="inferred from homology"/>